<organism>
    <name type="scientific">Homo sapiens</name>
    <name type="common">Human</name>
    <dbReference type="NCBI Taxonomy" id="9606"/>
    <lineage>
        <taxon>Eukaryota</taxon>
        <taxon>Metazoa</taxon>
        <taxon>Chordata</taxon>
        <taxon>Craniata</taxon>
        <taxon>Vertebrata</taxon>
        <taxon>Euteleostomi</taxon>
        <taxon>Mammalia</taxon>
        <taxon>Eutheria</taxon>
        <taxon>Euarchontoglires</taxon>
        <taxon>Primates</taxon>
        <taxon>Haplorrhini</taxon>
        <taxon>Catarrhini</taxon>
        <taxon>Hominidae</taxon>
        <taxon>Homo</taxon>
    </lineage>
</organism>
<sequence length="299" mass="33337">MEELEQGLLMQPWAWLQLAENSLLAKVFITKQGYALLVSDLQQVWHEQVDTSVVSQRAKELNKRLTAPPAAFLCHLDNLLRPLLKDAAHPSEATFSCDCVADALILRVRSELSGLPFYWNFHCMLASPSLVSQHLIRPLMGMSLALQCQVRELATLLHMKDLEIQDYQESGATLIRDRLKTEPFEENSFLEQFMIEKLPEACSIGDGKPFVMNLQDLYMAVTTQEVQVGQKHQGAGDPHTSNSASLQGIDSQCVNQPEQLVSSAPTLSAPEKESTGTSGPLQRPQLSKVKRKKPRGLFS</sequence>
<keyword id="KW-0002">3D-structure</keyword>
<keyword id="KW-0025">Alternative splicing</keyword>
<keyword id="KW-0160">Chromosomal rearrangement</keyword>
<keyword id="KW-0158">Chromosome</keyword>
<keyword id="KW-0175">Coiled coil</keyword>
<keyword id="KW-0225">Disease variant</keyword>
<keyword id="KW-0227">DNA damage</keyword>
<keyword id="KW-0234">DNA repair</keyword>
<keyword id="KW-0238">DNA-binding</keyword>
<keyword id="KW-0539">Nucleus</keyword>
<keyword id="KW-0597">Phosphoprotein</keyword>
<keyword id="KW-1267">Proteomics identification</keyword>
<keyword id="KW-1185">Reference proteome</keyword>
<keyword id="KW-0705">SCID</keyword>
<accession>Q9H9Q4</accession>
<accession>B8ZZA4</accession>
<accession>Q4ZFW7</accession>
<accession>Q6IA64</accession>
<accession>Q96JS9</accession>
<comment type="function">
    <text evidence="1 4 5 7 8 10 13 14 15 16 18 19 21 22 26 28 29 30 31 33">DNA repair protein involved in DNA non-homologous end joining (NHEJ); it is required for double-strand break (DSB) repair and V(D)J recombination and is also involved in telomere maintenance (PubMed:16439204, PubMed:16439205, PubMed:17317666, PubMed:17470781, PubMed:17717001, PubMed:18158905, PubMed:18644470, PubMed:20558749, PubMed:26100018, PubMed:28369633). Plays a key role in NHEJ by promoting the ligation of various mismatched and non-cohesive ends (PubMed:17470781, PubMed:17717001, PubMed:19056826). Together with PAXX, collaborates with DNA polymerase lambda (POLL) to promote joining of non-cohesive DNA ends (PubMed:25670504, PubMed:30250067). May act in concert with XRCC5-XRCC6 (Ku) to stimulate XRCC4-mediated joining of blunt ends and several types of mismatched ends that are non-complementary or partially complementary (PubMed:16439204, PubMed:16439205, PubMed:17317666, PubMed:17470781). In some studies, has been shown to associate with XRCC4 to form alternating helical filaments that bridge DNA and act like a bandage, holding together the broken DNA until it is repaired (PubMed:21768349, PubMed:21775435, PubMed:22228831, PubMed:22287571, PubMed:26100018, PubMed:27437582, PubMed:28500754). Alternatively, it has also been shown that rather than forming filaments, a single NHEJ1 dimer interacts through both head domains with XRCC4 to promote the close alignment of DNA ends (By similarity). The XRCC4-NHEJ1/XLF subcomplex binds to the DNA fragments of a DSB in a highly diffusive manner and robustly bridges two independent DNA molecules, holding the broken DNA fragments in close proximity to one other (PubMed:27437582, PubMed:28500754). The mobility of the bridges ensures that the ends remain accessible for further processing by other repair factors (PubMed:27437582). Binds DNA in a length-dependent manner (PubMed:17317666, PubMed:18158905).</text>
</comment>
<comment type="subunit">
    <text evidence="5 6 7 9 11 13 16 18 19 20 21 22 23 25 26 27 28 29 33 35 36">Homodimer; mainly exists as a homodimer when not associated with XRCC4 (PubMed:18046455, PubMed:18158905, PubMed:25574025, PubMed:25670504, PubMed:25941166). Interacts with XRCC4; the interaction is direct and is mediated via a head-to-head interaction between N-terminal head regions (PubMed:16439205, PubMed:17567543, PubMed:18158905, PubMed:20558749, PubMed:21768349, PubMed:21775435, PubMed:21936820, PubMed:22228831, PubMed:22287571, PubMed:22658747, PubMed:26100018, PubMed:27437582). Component of the core long-range non-homologous end joining (NHEJ) complex (also named DNA-PK complex) composed of PRKDC, LIG4, XRCC4, XRCC6/Ku70, XRCC5/Ku86 and NHEJ1/XLF (PubMed:16571728, PubMed:17317666, PubMed:33854234, PubMed:34352203, PubMed:17567543). Additional component of the NHEJ complex includes PAXX (PubMed:25574025, PubMed:25941166). Following autophosphorylation, PRKDC dissociates from DNA, leading to formation of the short-range NHEJ complex, composed of LIG4, XRCC4, XRCC6/Ku70, XRCC5/Ku86 and NHEJ1/XLF (PubMed:33854234). Interacts with POLL (DNA polymerase lambda); promoting POLL recruitment to double-strand breaks (DSBs) and stimulation of the end-filling activity of POLL (PubMed:30250067).</text>
</comment>
<comment type="interaction">
    <interactant intactId="EBI-847807">
        <id>Q9H9Q4</id>
    </interactant>
    <interactant intactId="EBI-847896">
        <id>P49917</id>
        <label>LIG4</label>
    </interactant>
    <organismsDiffer>false</organismsDiffer>
    <experiments>5</experiments>
</comment>
<comment type="interaction">
    <interactant intactId="EBI-847807">
        <id>Q9H9Q4</id>
    </interactant>
    <interactant intactId="EBI-717592">
        <id>Q13426</id>
        <label>XRCC4</label>
    </interactant>
    <organismsDiffer>false</organismsDiffer>
    <experiments>11</experiments>
</comment>
<comment type="interaction">
    <interactant intactId="EBI-15891382">
        <id>Q9H9Q4-1</id>
    </interactant>
    <interactant intactId="EBI-717592">
        <id>Q13426</id>
        <label>XRCC4</label>
    </interactant>
    <organismsDiffer>false</organismsDiffer>
    <experiments>4</experiments>
</comment>
<comment type="interaction">
    <interactant intactId="EBI-15891382">
        <id>Q9H9Q4-1</id>
    </interactant>
    <interactant intactId="EBI-15891375">
        <id>Q13426-2</id>
        <label>XRCC4</label>
    </interactant>
    <organismsDiffer>false</organismsDiffer>
    <experiments>3</experiments>
</comment>
<comment type="subcellular location">
    <subcellularLocation>
        <location evidence="4 5 16">Nucleus</location>
    </subcellularLocation>
    <subcellularLocation>
        <location evidence="12 14 29">Chromosome</location>
    </subcellularLocation>
    <text evidence="12 14 29">Localizes to site of double-strand breaks; recruitment is dependent on XRCC5-XRCC6 (Ku) heterodimer.</text>
</comment>
<comment type="alternative products">
    <event type="alternative splicing"/>
    <isoform>
        <id>Q9H9Q4-1</id>
        <name>1</name>
        <sequence type="displayed"/>
    </isoform>
    <isoform>
        <id>Q9H9Q4-2</id>
        <name>2</name>
        <sequence type="described" ref="VSP_017689"/>
    </isoform>
</comment>
<comment type="tissue specificity">
    <text evidence="4">Ubiquitously expressed.</text>
</comment>
<comment type="domain">
    <text evidence="11">The coiled-coil region mediates homodimerization.</text>
</comment>
<comment type="domain">
    <text evidence="19">The Leu-lock (Leu-115) site inserts into a hydrophobic pocket in XRCC4.</text>
</comment>
<comment type="domain">
    <text evidence="1 34">The XLM motif (also called the KBM motif or KBMX motif) and the interior region of the C-terminal tail preceding the XLM motif are essential for DNA end joining (PubMed:33289484). The sequence of the C-terminal tail is not critical for its role in end joining but it must be sufficiently long to interact with XRCC4 and to stabilize the interaction of XRCC4 with LIG4 (By similarity). A single XLM motif and C-terminal tail is sufficient to promote end joining (By similarity).</text>
</comment>
<comment type="PTM">
    <text evidence="14 21 31">Phosphorylated by PRKDC at the C-terminus in response to DNA damage (PubMed:18644470, PubMed:22228831, PubMed:28500754). Phosphorylations by PRKDC at the C-terminus of XRCC4 and NHEJ1/XLF are highly redundant and regulate ability of the XRCC4-NHEJ1/XLF subcomplex to bridge DNA (PubMed:22228831, PubMed:28500754). Phosphorylation does not prevent interaction with XRCC4 but disrupts ability to bridge DNA and promotes detachment from DNA (PubMed:22228831, PubMed:28500754).</text>
</comment>
<comment type="disease" evidence="4 5 7 16 17 24 30 37 39">
    <disease id="DI-02297">
        <name>Immunodeficiency 124, severe combined</name>
        <acronym>IMD124</acronym>
        <description>A form of severe combined immunodeficiency (SCID), a genetically and clinically heterogeneous group of rare congenital disorders characterized by impairment of both humoral and cell-mediated immunity, leukopenia and low or absent antibody levels. Patients with SCID present in infancy with recurrent, persistent infections by opportunistic organisms. The common characteristic of all types of SCID is absence of T-cell-mediated cellular immunity due to a defect in T- cell development. IMD124 is characterized by a profound T- and B- lymphocytopenia associated with increased cellular sensitivity to ionizing radiation, shortened telomeres and premature senescence of hematopoietic stem cells, microcephaly and growth retardation. Some patients may manifest SCID with sensitivity to ionizing radiation without microcephaly and mild growth retardation, probably due to hypomorphic NHEJ1 variants.</description>
        <dbReference type="MIM" id="611291"/>
    </disease>
    <text>The disease is caused by variants affecting the gene represented in this entry.</text>
</comment>
<comment type="disease" evidence="38">
    <disease id="DI-06949">
        <name>Microphthalmia/coloboma 13</name>
        <acronym>MCOPCB13</acronym>
        <description>A form of colobomatous microphthalmia, a disorder of eye formation, ranging from small size of a single eye to complete bilateral absence of ocular tissues. Ocular abnormalities like coloboma, opacities of the cornea and lens, scaring of the retina and choroid, and other abnormalities may also be present. Ocular colobomas are a set of malformations resulting from abnormal morphogenesis of the optic cup and stalk, and the fusion of the fetal fissure (optic fissure). MCOPCB13 is an autosomal recessive form characterized by variable ocular anomalies, even between eyes within the same patient. Patients may also exhibit high myopia, strabismus, nystagmus, and/or retinal pigmentary changes and atrophy.</description>
        <dbReference type="MIM" id="620968"/>
    </disease>
    <text evidence="38">The disease is caused by variants affecting the gene represented in this entry. The disease is caused by a homozygous NHEJ1 intronic variant that disrupts a conserved enhancer of IHH expression (i8), a gene known to be involved in eye development in mice.</text>
</comment>
<comment type="disease">
    <text evidence="3">A chromosomal aberration involving NHEJ1 is found in a patient with polymicrogyria. Translocation t(2;7)(q35;p22).</text>
</comment>
<comment type="miscellaneous">
    <text>Was named 'Cernunnos' after the enigmatic Celtic god of hunting, the underworld and fertility.</text>
</comment>
<comment type="similarity">
    <text evidence="45">Belongs to the XRCC4-XLF family. XLF subfamily.</text>
</comment>
<comment type="online information" name="NHEJ1base">
    <link uri="https://databases.lovd.nl/shared/genes/NHEJ1"/>
    <text>NHEJ1 mutation db</text>
</comment>
<reference key="1">
    <citation type="journal article" date="2006" name="Cell">
        <title>Cernunnos, a novel nonhomologous end-joining factor, is mutated in human immunodeficiency with microcephaly.</title>
        <authorList>
            <person name="Buck D."/>
            <person name="Malivert L."/>
            <person name="de Chasseval R."/>
            <person name="Barraud A."/>
            <person name="Fondaneche M.-C."/>
            <person name="Sanal O."/>
            <person name="Plebani A."/>
            <person name="Stephan J.-L."/>
            <person name="Hufnagel M."/>
            <person name="le Deist F."/>
            <person name="Fischer A."/>
            <person name="Durandy A."/>
            <person name="de Villartay J.-P."/>
            <person name="Revy P."/>
        </authorList>
    </citation>
    <scope>NUCLEOTIDE SEQUENCE [MRNA] (ISOFORM 1)</scope>
    <scope>FUNCTION</scope>
    <scope>SUBCELLULAR LOCATION</scope>
    <scope>TISSUE SPECIFICITY</scope>
    <scope>VARIANTS IMD124 GLY-57; ARG-123 AND 178-ARG--SER-299 DEL</scope>
    <scope>INVOLVEMENT IN IMD124</scope>
    <scope>CHARACTERIZATION OF VARIANTS IMD124 GLY-57; ARG-123 AND 178-ARG--SER-299 DEL</scope>
    <source>
        <tissue>Thymus</tissue>
    </source>
</reference>
<reference key="2">
    <citation type="journal article" date="2004" name="Nat. Genet.">
        <title>Complete sequencing and characterization of 21,243 full-length human cDNAs.</title>
        <authorList>
            <person name="Ota T."/>
            <person name="Suzuki Y."/>
            <person name="Nishikawa T."/>
            <person name="Otsuki T."/>
            <person name="Sugiyama T."/>
            <person name="Irie R."/>
            <person name="Wakamatsu A."/>
            <person name="Hayashi K."/>
            <person name="Sato H."/>
            <person name="Nagai K."/>
            <person name="Kimura K."/>
            <person name="Makita H."/>
            <person name="Sekine M."/>
            <person name="Obayashi M."/>
            <person name="Nishi T."/>
            <person name="Shibahara T."/>
            <person name="Tanaka T."/>
            <person name="Ishii S."/>
            <person name="Yamamoto J."/>
            <person name="Saito K."/>
            <person name="Kawai Y."/>
            <person name="Isono Y."/>
            <person name="Nakamura Y."/>
            <person name="Nagahari K."/>
            <person name="Murakami K."/>
            <person name="Yasuda T."/>
            <person name="Iwayanagi T."/>
            <person name="Wagatsuma M."/>
            <person name="Shiratori A."/>
            <person name="Sudo H."/>
            <person name="Hosoiri T."/>
            <person name="Kaku Y."/>
            <person name="Kodaira H."/>
            <person name="Kondo H."/>
            <person name="Sugawara M."/>
            <person name="Takahashi M."/>
            <person name="Kanda K."/>
            <person name="Yokoi T."/>
            <person name="Furuya T."/>
            <person name="Kikkawa E."/>
            <person name="Omura Y."/>
            <person name="Abe K."/>
            <person name="Kamihara K."/>
            <person name="Katsuta N."/>
            <person name="Sato K."/>
            <person name="Tanikawa M."/>
            <person name="Yamazaki M."/>
            <person name="Ninomiya K."/>
            <person name="Ishibashi T."/>
            <person name="Yamashita H."/>
            <person name="Murakawa K."/>
            <person name="Fujimori K."/>
            <person name="Tanai H."/>
            <person name="Kimata M."/>
            <person name="Watanabe M."/>
            <person name="Hiraoka S."/>
            <person name="Chiba Y."/>
            <person name="Ishida S."/>
            <person name="Ono Y."/>
            <person name="Takiguchi S."/>
            <person name="Watanabe S."/>
            <person name="Yosida M."/>
            <person name="Hotuta T."/>
            <person name="Kusano J."/>
            <person name="Kanehori K."/>
            <person name="Takahashi-Fujii A."/>
            <person name="Hara H."/>
            <person name="Tanase T.-O."/>
            <person name="Nomura Y."/>
            <person name="Togiya S."/>
            <person name="Komai F."/>
            <person name="Hara R."/>
            <person name="Takeuchi K."/>
            <person name="Arita M."/>
            <person name="Imose N."/>
            <person name="Musashino K."/>
            <person name="Yuuki H."/>
            <person name="Oshima A."/>
            <person name="Sasaki N."/>
            <person name="Aotsuka S."/>
            <person name="Yoshikawa Y."/>
            <person name="Matsunawa H."/>
            <person name="Ichihara T."/>
            <person name="Shiohata N."/>
            <person name="Sano S."/>
            <person name="Moriya S."/>
            <person name="Momiyama H."/>
            <person name="Satoh N."/>
            <person name="Takami S."/>
            <person name="Terashima Y."/>
            <person name="Suzuki O."/>
            <person name="Nakagawa S."/>
            <person name="Senoh A."/>
            <person name="Mizoguchi H."/>
            <person name="Goto Y."/>
            <person name="Shimizu F."/>
            <person name="Wakebe H."/>
            <person name="Hishigaki H."/>
            <person name="Watanabe T."/>
            <person name="Sugiyama A."/>
            <person name="Takemoto M."/>
            <person name="Kawakami B."/>
            <person name="Yamazaki M."/>
            <person name="Watanabe K."/>
            <person name="Kumagai A."/>
            <person name="Itakura S."/>
            <person name="Fukuzumi Y."/>
            <person name="Fujimori Y."/>
            <person name="Komiyama M."/>
            <person name="Tashiro H."/>
            <person name="Tanigami A."/>
            <person name="Fujiwara T."/>
            <person name="Ono T."/>
            <person name="Yamada K."/>
            <person name="Fujii Y."/>
            <person name="Ozaki K."/>
            <person name="Hirao M."/>
            <person name="Ohmori Y."/>
            <person name="Kawabata A."/>
            <person name="Hikiji T."/>
            <person name="Kobatake N."/>
            <person name="Inagaki H."/>
            <person name="Ikema Y."/>
            <person name="Okamoto S."/>
            <person name="Okitani R."/>
            <person name="Kawakami T."/>
            <person name="Noguchi S."/>
            <person name="Itoh T."/>
            <person name="Shigeta K."/>
            <person name="Senba T."/>
            <person name="Matsumura K."/>
            <person name="Nakajima Y."/>
            <person name="Mizuno T."/>
            <person name="Morinaga M."/>
            <person name="Sasaki M."/>
            <person name="Togashi T."/>
            <person name="Oyama M."/>
            <person name="Hata H."/>
            <person name="Watanabe M."/>
            <person name="Komatsu T."/>
            <person name="Mizushima-Sugano J."/>
            <person name="Satoh T."/>
            <person name="Shirai Y."/>
            <person name="Takahashi Y."/>
            <person name="Nakagawa K."/>
            <person name="Okumura K."/>
            <person name="Nagase T."/>
            <person name="Nomura N."/>
            <person name="Kikuchi H."/>
            <person name="Masuho Y."/>
            <person name="Yamashita R."/>
            <person name="Nakai K."/>
            <person name="Yada T."/>
            <person name="Nakamura Y."/>
            <person name="Ohara O."/>
            <person name="Isogai T."/>
            <person name="Sugano S."/>
        </authorList>
    </citation>
    <scope>NUCLEOTIDE SEQUENCE [LARGE SCALE MRNA] (ISOFORM 1)</scope>
</reference>
<reference key="3">
    <citation type="submission" date="2004-06" db="EMBL/GenBank/DDBJ databases">
        <title>Cloning of human full open reading frames in Gateway(TM) system entry vector (pDONR201).</title>
        <authorList>
            <person name="Ebert L."/>
            <person name="Schick M."/>
            <person name="Neubert P."/>
            <person name="Schatten R."/>
            <person name="Henze S."/>
            <person name="Korn B."/>
        </authorList>
    </citation>
    <scope>NUCLEOTIDE SEQUENCE [LARGE SCALE MRNA] (ISOFORM 1)</scope>
</reference>
<reference key="4">
    <citation type="journal article" date="2005" name="Nature">
        <title>Generation and annotation of the DNA sequences of human chromosomes 2 and 4.</title>
        <authorList>
            <person name="Hillier L.W."/>
            <person name="Graves T.A."/>
            <person name="Fulton R.S."/>
            <person name="Fulton L.A."/>
            <person name="Pepin K.H."/>
            <person name="Minx P."/>
            <person name="Wagner-McPherson C."/>
            <person name="Layman D."/>
            <person name="Wylie K."/>
            <person name="Sekhon M."/>
            <person name="Becker M.C."/>
            <person name="Fewell G.A."/>
            <person name="Delehaunty K.D."/>
            <person name="Miner T.L."/>
            <person name="Nash W.E."/>
            <person name="Kremitzki C."/>
            <person name="Oddy L."/>
            <person name="Du H."/>
            <person name="Sun H."/>
            <person name="Bradshaw-Cordum H."/>
            <person name="Ali J."/>
            <person name="Carter J."/>
            <person name="Cordes M."/>
            <person name="Harris A."/>
            <person name="Isak A."/>
            <person name="van Brunt A."/>
            <person name="Nguyen C."/>
            <person name="Du F."/>
            <person name="Courtney L."/>
            <person name="Kalicki J."/>
            <person name="Ozersky P."/>
            <person name="Abbott S."/>
            <person name="Armstrong J."/>
            <person name="Belter E.A."/>
            <person name="Caruso L."/>
            <person name="Cedroni M."/>
            <person name="Cotton M."/>
            <person name="Davidson T."/>
            <person name="Desai A."/>
            <person name="Elliott G."/>
            <person name="Erb T."/>
            <person name="Fronick C."/>
            <person name="Gaige T."/>
            <person name="Haakenson W."/>
            <person name="Haglund K."/>
            <person name="Holmes A."/>
            <person name="Harkins R."/>
            <person name="Kim K."/>
            <person name="Kruchowski S.S."/>
            <person name="Strong C.M."/>
            <person name="Grewal N."/>
            <person name="Goyea E."/>
            <person name="Hou S."/>
            <person name="Levy A."/>
            <person name="Martinka S."/>
            <person name="Mead K."/>
            <person name="McLellan M.D."/>
            <person name="Meyer R."/>
            <person name="Randall-Maher J."/>
            <person name="Tomlinson C."/>
            <person name="Dauphin-Kohlberg S."/>
            <person name="Kozlowicz-Reilly A."/>
            <person name="Shah N."/>
            <person name="Swearengen-Shahid S."/>
            <person name="Snider J."/>
            <person name="Strong J.T."/>
            <person name="Thompson J."/>
            <person name="Yoakum M."/>
            <person name="Leonard S."/>
            <person name="Pearman C."/>
            <person name="Trani L."/>
            <person name="Radionenko M."/>
            <person name="Waligorski J.E."/>
            <person name="Wang C."/>
            <person name="Rock S.M."/>
            <person name="Tin-Wollam A.-M."/>
            <person name="Maupin R."/>
            <person name="Latreille P."/>
            <person name="Wendl M.C."/>
            <person name="Yang S.-P."/>
            <person name="Pohl C."/>
            <person name="Wallis J.W."/>
            <person name="Spieth J."/>
            <person name="Bieri T.A."/>
            <person name="Berkowicz N."/>
            <person name="Nelson J.O."/>
            <person name="Osborne J."/>
            <person name="Ding L."/>
            <person name="Meyer R."/>
            <person name="Sabo A."/>
            <person name="Shotland Y."/>
            <person name="Sinha P."/>
            <person name="Wohldmann P.E."/>
            <person name="Cook L.L."/>
            <person name="Hickenbotham M.T."/>
            <person name="Eldred J."/>
            <person name="Williams D."/>
            <person name="Jones T.A."/>
            <person name="She X."/>
            <person name="Ciccarelli F.D."/>
            <person name="Izaurralde E."/>
            <person name="Taylor J."/>
            <person name="Schmutz J."/>
            <person name="Myers R.M."/>
            <person name="Cox D.R."/>
            <person name="Huang X."/>
            <person name="McPherson J.D."/>
            <person name="Mardis E.R."/>
            <person name="Clifton S.W."/>
            <person name="Warren W.C."/>
            <person name="Chinwalla A.T."/>
            <person name="Eddy S.R."/>
            <person name="Marra M.A."/>
            <person name="Ovcharenko I."/>
            <person name="Furey T.S."/>
            <person name="Miller W."/>
            <person name="Eichler E.E."/>
            <person name="Bork P."/>
            <person name="Suyama M."/>
            <person name="Torrents D."/>
            <person name="Waterston R.H."/>
            <person name="Wilson R.K."/>
        </authorList>
    </citation>
    <scope>NUCLEOTIDE SEQUENCE [LARGE SCALE GENOMIC DNA]</scope>
</reference>
<reference key="5">
    <citation type="journal article" date="2004" name="Genome Res.">
        <title>The status, quality, and expansion of the NIH full-length cDNA project: the Mammalian Gene Collection (MGC).</title>
        <authorList>
            <consortium name="The MGC Project Team"/>
        </authorList>
    </citation>
    <scope>NUCLEOTIDE SEQUENCE [LARGE SCALE MRNA] (ISOFORM 1)</scope>
    <scope>NUCLEOTIDE SEQUENCE [LARGE SCALE MRNA] OF 177-299 (ISOFORM 2)</scope>
    <source>
        <tissue>Bone marrow</tissue>
        <tissue>Skin</tissue>
    </source>
</reference>
<reference key="6">
    <citation type="journal article" date="2003" name="Proc. Natl. Acad. Sci. U.S.A.">
        <title>Nonhomologous end joining and V(D)J recombination require an additional factor.</title>
        <authorList>
            <person name="Dai Y."/>
            <person name="Kysela B."/>
            <person name="Hanakahi L.A."/>
            <person name="Manolis K."/>
            <person name="Riballo E."/>
            <person name="Stumm M."/>
            <person name="Harville T.O."/>
            <person name="West S.C."/>
            <person name="Oettinger M.A."/>
            <person name="Jeggo P.A."/>
        </authorList>
    </citation>
    <scope>DISEASE</scope>
</reference>
<reference key="7">
    <citation type="journal article" date="2006" name="Cell">
        <title>XLF interacts with the XRCC4-DNA ligase IV complex to promote DNA nonhomologous end-joining.</title>
        <authorList>
            <person name="Ahnesorg P."/>
            <person name="Smith P."/>
            <person name="Jackson S.P."/>
        </authorList>
    </citation>
    <scope>FUNCTION</scope>
    <scope>SUBCELLULAR LOCATION</scope>
    <scope>INTERACTION WITH XRCC4</scope>
    <scope>INVOLVEMENT IN IMD124</scope>
</reference>
<reference key="8">
    <citation type="journal article" date="2006" name="J. Biol. Chem.">
        <title>Cernunnos interacts with the XRCC4 x DNA-ligase IV complex and is homologous to the yeast nonhomologous end-joining factor Nej1.</title>
        <authorList>
            <person name="Callebaut I."/>
            <person name="Malivert L."/>
            <person name="Fischer A."/>
            <person name="Mornon J.P."/>
            <person name="Revy P."/>
            <person name="de Villartay J.P."/>
        </authorList>
    </citation>
    <scope>INTERACTION WITH XRCC4-LIG4 COMPLEX</scope>
</reference>
<reference key="9">
    <citation type="journal article" date="2007" name="DNA Repair">
        <title>Modes of interaction among yeast Nej1, Lif1 and Dnl4 proteins and comparison to human XLF, XRCC4 and Lig4.</title>
        <authorList>
            <person name="Deshpande R.A."/>
            <person name="Wilson T.E."/>
        </authorList>
    </citation>
    <scope>INTERACTION WITH XRCC4 AND LIG4</scope>
</reference>
<reference key="10">
    <citation type="journal article" date="2007" name="Hum. Mutat.">
        <title>Truncation of NHEJ1 in a patient with polymicrogyria.</title>
        <authorList>
            <person name="Cantagrel V."/>
            <person name="Lossi A.M."/>
            <person name="Lisgo S."/>
            <person name="Missirian C."/>
            <person name="Borges A."/>
            <person name="Philip N."/>
            <person name="Fernandez C."/>
            <person name="Cardoso C."/>
            <person name="Figarella-Branger D."/>
            <person name="Moncla A."/>
            <person name="Lindsay S."/>
            <person name="Dobyns W.B."/>
            <person name="Villard L."/>
        </authorList>
    </citation>
    <scope>CHROMOSOMAL TRANSLOCATION</scope>
</reference>
<reference key="11">
    <citation type="journal article" date="2007" name="Nucleic Acids Res.">
        <title>Single-stranded DNA ligation and XLF-stimulated incompatible DNA end ligation by the XRCC4-DNA ligase IV complex: influence of terminal DNA sequence.</title>
        <authorList>
            <person name="Gu J."/>
            <person name="Lu H."/>
            <person name="Tsai A.G."/>
            <person name="Schwarz K."/>
            <person name="Lieber M.R."/>
        </authorList>
    </citation>
    <scope>FUNCTION</scope>
</reference>
<reference key="12">
    <citation type="journal article" date="2007" name="J. Biol. Chem.">
        <title>Length-dependent binding of human XLF to DNA and stimulation of XRCC4.DNA ligase IV activity.</title>
        <authorList>
            <person name="Lu H."/>
            <person name="Pannicke U."/>
            <person name="Schwarz K."/>
            <person name="Lieber M.R."/>
        </authorList>
    </citation>
    <scope>INTERACTION WITH XRCC4-LIG4 COMPLEX</scope>
    <scope>DNA-BINDING</scope>
    <scope>CHARACTERIZATION OF VARIANT IMD124 GLY-57</scope>
</reference>
<reference key="13">
    <citation type="journal article" date="2007" name="Proc. Natl. Acad. Sci. U.S.A.">
        <title>Cernunnos/XLF promotes the ligation of mismatched and noncohesive DNA ends.</title>
        <authorList>
            <person name="Tsai C.J."/>
            <person name="Kim S.A."/>
            <person name="Chu G."/>
        </authorList>
    </citation>
    <scope>FUNCTION</scope>
</reference>
<reference key="14">
    <citation type="journal article" date="2008" name="DNA Repair">
        <title>DNA-PK and ATM phosphorylation sites in XLF/Cernunnos are not required for repair of DNA double strand breaks.</title>
        <authorList>
            <person name="Yu Y."/>
            <person name="Mahaney B.L."/>
            <person name="Yano K."/>
            <person name="Ye R."/>
            <person name="Fang S."/>
            <person name="Douglas P."/>
            <person name="Chen D.J."/>
            <person name="Lees-Miller S.P."/>
        </authorList>
    </citation>
    <scope>FUNCTION</scope>
    <scope>SUBCELLULAR LOCATION</scope>
    <scope>PHOSPHORYLATION AT SER-132; SER-203; SER-245; SER-251; SER-263 AND THR-266</scope>
    <scope>MUTAGENESIS OF SER-132; SER-203; SER-245; SER-251; SER-263 AND THR-266</scope>
</reference>
<reference key="15">
    <citation type="journal article" date="2008" name="EMBO Rep.">
        <title>Ku recruits XLF to DNA double-strand breaks.</title>
        <authorList>
            <person name="Yano K."/>
            <person name="Morotomi-Yano K."/>
            <person name="Wang S.Y."/>
            <person name="Uematsu N."/>
            <person name="Lee K.J."/>
            <person name="Asaithamby A."/>
            <person name="Weterings E."/>
            <person name="Chen D.J."/>
        </authorList>
    </citation>
    <scope>SUBCELLULAR LOCATION</scope>
</reference>
<reference key="16">
    <citation type="journal article" date="2009" name="Nucleic Acids Res.">
        <title>XLF-Cernunnos promotes DNA ligase IV-XRCC4 re-adenylation following ligation.</title>
        <authorList>
            <person name="Riballo E."/>
            <person name="Woodbine L."/>
            <person name="Stiff T."/>
            <person name="Walker S.A."/>
            <person name="Goodarzi A.A."/>
            <person name="Jeggo P.A."/>
        </authorList>
    </citation>
    <scope>FUNCTION</scope>
</reference>
<reference key="17">
    <citation type="journal article" date="2010" name="J. Biol. Chem.">
        <title>Delineation of the Xrcc4-interacting region in the globular head domain of cernunnos/XLF.</title>
        <authorList>
            <person name="Malivert L."/>
            <person name="Ropars V."/>
            <person name="Nunez M."/>
            <person name="Drevet P."/>
            <person name="Miron S."/>
            <person name="Faure G."/>
            <person name="Guerois R."/>
            <person name="Mornon J.P."/>
            <person name="Revy P."/>
            <person name="Charbonnier J.B."/>
            <person name="Callebaut I."/>
            <person name="de Villartay J.P."/>
        </authorList>
    </citation>
    <scope>FUNCTION</scope>
    <scope>SUBCELLULAR LOCATION</scope>
    <scope>INTERACTION WITH XRCC4</scope>
    <scope>MUTAGENESIS OF GLN-11; TRP-13; TRP-15; LEU-24; LYS-26; LEU-37; ASP-40; LEU-41; GLN-43; LEU-61; ARG-64; LEU-65; LEU-115; PRO-116; PHE-117; TYR-118; TRP-119; LEU-135; ARG-137; PRO-138; LEU-139; ARG-178; GLU-182 AND 189-PHE-LEU-190</scope>
    <scope>CHARACTERIZATION OF VARIANTS IMD124 GLY-57 AND ARG-123</scope>
</reference>
<reference key="18">
    <citation type="journal article" date="2012" name="Nucleic Acids Res.">
        <title>XRCC4's interaction with XLF is required for coding (but not signal) end joining.</title>
        <authorList>
            <person name="Roy S."/>
            <person name="Andres S.N."/>
            <person name="Vergnes A."/>
            <person name="Neal J.A."/>
            <person name="Xu Y."/>
            <person name="Yu Y."/>
            <person name="Lees-Miller S.P."/>
            <person name="Junop M."/>
            <person name="Modesti M."/>
            <person name="Meek K."/>
        </authorList>
    </citation>
    <scope>FUNCTION</scope>
    <scope>INTERACTION WITH XRCC4</scope>
    <scope>PHOSPHORYLATION AT SER-132; SER-203; SER-245; SER-251; SER-263 AND THR-266</scope>
    <scope>MUTAGENESIS OF SER-132; SER-203; SER-245; SER-251; SER-263 AND THR-266</scope>
</reference>
<reference key="19">
    <citation type="journal article" date="2012" name="Structure">
        <title>Structural insights into the role of domain flexibility in human DNA ligase IV.</title>
        <authorList>
            <person name="Ochi T."/>
            <person name="Wu Q."/>
            <person name="Chirgadze D.Y."/>
            <person name="Grossmann J.G."/>
            <person name="Bolanos-Garcia V.M."/>
            <person name="Blundell T.L."/>
        </authorList>
    </citation>
    <scope>INTERACTION WITH XRCC4 AND LIG4</scope>
</reference>
<reference key="20">
    <citation type="journal article" date="2013" name="J. Proteome Res.">
        <title>Toward a comprehensive characterization of a human cancer cell phosphoproteome.</title>
        <authorList>
            <person name="Zhou H."/>
            <person name="Di Palma S."/>
            <person name="Preisinger C."/>
            <person name="Peng M."/>
            <person name="Polat A.N."/>
            <person name="Heck A.J."/>
            <person name="Mohammed S."/>
        </authorList>
    </citation>
    <scope>PHOSPHORYLATION [LARGE SCALE ANALYSIS] AT SER-287</scope>
    <scope>IDENTIFICATION BY MASS SPECTROMETRY [LARGE SCALE ANALYSIS]</scope>
    <source>
        <tissue>Erythroleukemia</tissue>
    </source>
</reference>
<reference key="21">
    <citation type="journal article" date="2015" name="Cell Death Differ.">
        <title>XLS (c9orf142) is a new component of mammalian DNA double-stranded break repair.</title>
        <authorList>
            <person name="Craxton A."/>
            <person name="Somers J."/>
            <person name="Munnur D."/>
            <person name="Jukes-Jones R."/>
            <person name="Cain K."/>
            <person name="Malewicz M."/>
        </authorList>
    </citation>
    <scope>SUBUNIT</scope>
</reference>
<reference key="22">
    <citation type="journal article" date="2015" name="Mol. Cell. Biol.">
        <title>XRCC4/XLF interaction is variably required for DNA repair and is not required for ligase IV stimulation.</title>
        <authorList>
            <person name="Roy S."/>
            <person name="de Melo A.J."/>
            <person name="Xu Y."/>
            <person name="Tadi S.K."/>
            <person name="Negrel A."/>
            <person name="Hendrickson E."/>
            <person name="Modesti M."/>
            <person name="Meek K."/>
        </authorList>
    </citation>
    <scope>FUNCTION</scope>
    <scope>INTERACTION WITH XRCC4</scope>
    <scope>MUTAGENESIS OF LEU-115</scope>
</reference>
<reference key="23">
    <citation type="journal article" date="2015" name="Nat. Commun.">
        <title>Interactome analysis identifies a new paralogue of XRCC4 in non-homologous end joining DNA repair pathway.</title>
        <authorList>
            <person name="Xing M."/>
            <person name="Yang M."/>
            <person name="Huo W."/>
            <person name="Feng F."/>
            <person name="Wei L."/>
            <person name="Jiang W."/>
            <person name="Ning S."/>
            <person name="Yan Z."/>
            <person name="Li W."/>
            <person name="Wang Q."/>
            <person name="Hou M."/>
            <person name="Dong C."/>
            <person name="Guo R."/>
            <person name="Gao G."/>
            <person name="Ji J."/>
            <person name="Zha S."/>
            <person name="Lan L."/>
            <person name="Liang H."/>
            <person name="Xu D."/>
        </authorList>
    </citation>
    <scope>SUBUNIT</scope>
</reference>
<reference key="24">
    <citation type="journal article" date="2015" name="Science">
        <title>DNA repair. PAXX, a paralog of XRCC4 and XLF, interacts with Ku to promote DNA double-strand break repair.</title>
        <authorList>
            <person name="Ochi T."/>
            <person name="Blackford A.N."/>
            <person name="Coates J."/>
            <person name="Jhujh S."/>
            <person name="Mehmood S."/>
            <person name="Tamura N."/>
            <person name="Travers J."/>
            <person name="Wu Q."/>
            <person name="Draviam V.M."/>
            <person name="Robinson C.V."/>
            <person name="Blundell T.L."/>
            <person name="Jackson S.P."/>
        </authorList>
    </citation>
    <scope>SUBUNIT</scope>
</reference>
<reference key="25">
    <citation type="journal article" date="2016" name="Nature">
        <title>Sliding sleeves of XRCC4-XLF bridge DNA and connect fragments of broken DNA.</title>
        <authorList>
            <person name="Brouwer I."/>
            <person name="Sitters G."/>
            <person name="Candelli A."/>
            <person name="Heerema S.J."/>
            <person name="Heller I."/>
            <person name="de Melo A.J."/>
            <person name="Zhang H."/>
            <person name="Normanno D."/>
            <person name="Modesti M."/>
            <person name="Peterman E.J."/>
            <person name="Wuite G.J."/>
        </authorList>
    </citation>
    <scope>FUNCTION</scope>
    <scope>INTERACTION WITH XRCC4</scope>
    <scope>SUBCELLULAR LOCATION</scope>
</reference>
<reference key="26">
    <citation type="journal article" date="2016" name="Nat. Commun.">
        <title>The Ku-binding motif is a conserved module for recruitment and stimulation of non-homologous end-joining proteins.</title>
        <authorList>
            <person name="Grundy G.J."/>
            <person name="Rulten S.L."/>
            <person name="Arribas-Bosacoma R."/>
            <person name="Davidson K."/>
            <person name="Kozik Z."/>
            <person name="Oliver A.W."/>
            <person name="Pearl L.H."/>
            <person name="Caldecott K.W."/>
        </authorList>
    </citation>
    <scope>XLM MOTIF</scope>
</reference>
<reference key="27">
    <citation type="journal article" date="2017" name="Elife">
        <title>Mutational phospho-mimicry reveals a regulatory role for the XRCC4 and XLF C-terminal tails in modulating DNA bridging during classical non-homologous end joining.</title>
        <authorList>
            <person name="Normanno D."/>
            <person name="Negrel A."/>
            <person name="de Melo A.J."/>
            <person name="Betzi S."/>
            <person name="Meek K."/>
            <person name="Modesti M."/>
        </authorList>
    </citation>
    <scope>FUNCTION</scope>
    <scope>PHOSPHORYLATION AT SER-132; SER-203; SER-245 AND SER-251</scope>
    <scope>MUTAGENESIS OF SER-132; SER-203; SER-245 AND SER-251</scope>
</reference>
<reference key="28">
    <citation type="journal article" date="2018" name="Nat. Commun.">
        <title>PAXX and its paralogs synergistically direct DNA polymerase lambda activity in DNA repair.</title>
        <authorList>
            <person name="Craxton A."/>
            <person name="Munnur D."/>
            <person name="Jukes-Jones R."/>
            <person name="Skalka G."/>
            <person name="Langlais C."/>
            <person name="Cain K."/>
            <person name="Malewicz M."/>
        </authorList>
    </citation>
    <scope>FUNCTION</scope>
    <scope>INTERACTION WITH POLL</scope>
</reference>
<reference key="29">
    <citation type="journal article" date="2018" name="Nat. Struct. Mol. Biol.">
        <title>A single XLF dimer bridges DNA ends during nonhomologous end joining.</title>
        <authorList>
            <person name="Graham T.G.W."/>
            <person name="Carney S.M."/>
            <person name="Walter J.C."/>
            <person name="Loparo J.J."/>
        </authorList>
    </citation>
    <scope>MUTAGENESIS OF LEU-115</scope>
</reference>
<reference key="30">
    <citation type="journal article" date="2020" name="Elife">
        <title>XLF acts as a flexible connector during non-homologous end joining.</title>
        <authorList>
            <person name="Carney S.M."/>
            <person name="Moreno A.T."/>
            <person name="Piatt S.C."/>
            <person name="Cisneros-Aguirre M."/>
            <person name="Lopezcolorado F.W."/>
            <person name="Stark J.M."/>
            <person name="Loparo J.J."/>
        </authorList>
    </citation>
    <scope>DOMAIN</scope>
</reference>
<reference evidence="49" key="31">
    <citation type="journal article" date="2007" name="Mol. Cell">
        <title>Crystal structure of human XLF: a twist in nonhomologous DNA end-joining.</title>
        <authorList>
            <person name="Andres S.N."/>
            <person name="Modesti M."/>
            <person name="Tsai C.J."/>
            <person name="Chu G."/>
            <person name="Junop M.S."/>
        </authorList>
    </citation>
    <scope>X-RAY CRYSTALLOGRAPHY (2.50 ANGSTROMS) OF 1-224</scope>
    <scope>FUNCTION</scope>
    <scope>INTERACTION WITH XRCC4</scope>
    <scope>SUBUNIT</scope>
    <scope>MUTAGENESIS OF ILE-105; GLU-111; LEU-115; GLU-169; LEU-174; ARG-178; LEU-179; GLU-185; ILE-195 AND SER-278</scope>
</reference>
<reference key="32">
    <citation type="journal article" date="2008" name="EMBO J.">
        <title>Crystal structure of human XLF/Cernunnos reveals unexpected differences from XRCC4 with implications for NHEJ.</title>
        <authorList>
            <person name="Li Y."/>
            <person name="Chirgadze D.Y."/>
            <person name="Bolanos-Garcia V.M."/>
            <person name="Sibanda B.L."/>
            <person name="Davies O.R."/>
            <person name="Ahnesorg P."/>
            <person name="Jackson S.P."/>
            <person name="Blundell T.L."/>
        </authorList>
    </citation>
    <scope>X-RAY CRYSTALLOGRAPHY (2.3 ANGSTROMS) OF 1-233</scope>
    <scope>COILED-COIL REGION</scope>
    <scope>SUBUNIT</scope>
</reference>
<reference key="33">
    <citation type="journal article" date="2011" name="Acta Crystallogr. F">
        <title>Crystallization and preliminary X-ray diffraction analysis of the human XRCC4-XLF complex.</title>
        <authorList>
            <person name="Andres S.N."/>
            <person name="Junop M.S."/>
        </authorList>
    </citation>
    <scope>CRYSTALLIZATION</scope>
</reference>
<reference evidence="53" key="34">
    <citation type="journal article" date="2011" name="Biochem. Soc. Trans.">
        <title>Non-homologous end-joining partners in a helical dance: structural studies of XLF-XRCC4 interactions.</title>
        <authorList>
            <person name="Wu Q."/>
            <person name="Ochi T."/>
            <person name="Matak-Vinkovic D."/>
            <person name="Robinson C.V."/>
            <person name="Chirgadze D.Y."/>
            <person name="Blundell T.L."/>
        </authorList>
    </citation>
    <scope>X-RAY CRYSTALLOGRAPHY (8.49 ANGSTROMS) OF 1-233 IN COMPLEX WITH NHEJ1</scope>
    <scope>INTERACTION WITH NHEJ1</scope>
</reference>
<reference evidence="52" key="35">
    <citation type="journal article" date="2011" name="J. Biol. Chem.">
        <title>XRCC4 protein interactions with XRCC4-like factor (XLF) create an extended grooved scaffold for DNA ligation and double strand break repair.</title>
        <authorList>
            <person name="Hammel M."/>
            <person name="Rey M."/>
            <person name="Yu Y."/>
            <person name="Mani R.S."/>
            <person name="Classen S."/>
            <person name="Liu M."/>
            <person name="Pique M.E."/>
            <person name="Fang S."/>
            <person name="Mahaney B.L."/>
            <person name="Weinfeld M."/>
            <person name="Schriemer D.C."/>
            <person name="Lees-Miller S.P."/>
            <person name="Tainer J.A."/>
        </authorList>
    </citation>
    <scope>X-RAY CRYSTALLOGRAPHY (3.97 ANGSTROMS) OF 1-224 IN COMPLEX WITH XRCC4</scope>
    <scope>FUNCTION</scope>
    <scope>DOMAIN</scope>
    <scope>INTERACTION WITH XRCC4</scope>
    <scope>MUTAGENESIS OF 64-ARG-LEU-65 AND LEU-115</scope>
</reference>
<reference evidence="51" key="36">
    <citation type="journal article" date="2012" name="Nucleic Acids Res.">
        <title>A human XRCC4-XLF complex bridges DNA.</title>
        <authorList>
            <person name="Andres S.N."/>
            <person name="Vergnes A."/>
            <person name="Ristic D."/>
            <person name="Wyman C."/>
            <person name="Modesti M."/>
            <person name="Junop M."/>
        </authorList>
    </citation>
    <scope>X-RAY CRYSTALLOGRAPHY (3.94 ANGSTROMS) OF 1-224 IN COMPLEX WITH XRCC4</scope>
    <scope>FUNCTION</scope>
    <scope>INTERACTION WITH XRCC4</scope>
    <scope>MUTAGENESIS OF LEU-115 AND LYS-293</scope>
</reference>
<reference evidence="50" key="37">
    <citation type="journal article" date="2011" name="Proc. Natl. Acad. Sci. U.S.A.">
        <title>Structural characterization of filaments formed by human Xrcc4-Cernunnos/XLF complex involved in nonhomologous DNA end-joining.</title>
        <authorList>
            <person name="Ropars V."/>
            <person name="Drevet P."/>
            <person name="Legrand P."/>
            <person name="Baconnais S."/>
            <person name="Amram J."/>
            <person name="Faure G."/>
            <person name="Marquez J.A."/>
            <person name="Pietrement O."/>
            <person name="Guerois R."/>
            <person name="Callebaut I."/>
            <person name="Le Cam E."/>
            <person name="Revy P."/>
            <person name="de Villartay J.P."/>
            <person name="Charbonnier J.B."/>
        </authorList>
    </citation>
    <scope>X-RAY CRYSTALLOGRAPHY (5.50 ANGSTROMS) OF 1-224 IN COMPLEX WITH XRCC4</scope>
    <scope>FUNCTION</scope>
    <scope>INTERACTION WITH XRCC4</scope>
    <scope>MUTAGENESIS OF ARG-64 AND GLU-111</scope>
</reference>
<reference evidence="56 57" key="38">
    <citation type="journal article" date="2021" name="Mol. Cell">
        <title>Cryo-EM of NHEJ supercomplexes provides insights into DNA repair.</title>
        <authorList>
            <person name="Chaplin A.K."/>
            <person name="Hardwick S.W."/>
            <person name="Stavridi A.K."/>
            <person name="Buehl C.J."/>
            <person name="Goff N.J."/>
            <person name="Ropars V."/>
            <person name="Liang S."/>
            <person name="De Oliveira T.M."/>
            <person name="Chirgadze D.Y."/>
            <person name="Meek K."/>
            <person name="Charbonnier J.B."/>
            <person name="Blundell T.L."/>
        </authorList>
    </citation>
    <scope>STRUCTURE BY ELECTRON MICROSCOPY (4.14 ANGSTROMS) IN COMPLEX WITH THE NHEJ COMPLEX AND DNA</scope>
    <scope>IDENTIFICATION IN THE NHEJ COMPLEX</scope>
</reference>
<reference evidence="54 55" key="39">
    <citation type="journal article" date="2021" name="Nature">
        <title>Structural basis of long-range to short-range synaptic transition in NHEJ.</title>
        <authorList>
            <person name="Chen S."/>
            <person name="Lee L."/>
            <person name="Naila T."/>
            <person name="Fishbain S."/>
            <person name="Wang A."/>
            <person name="Tomkinson A.E."/>
            <person name="Lees-Miller S.P."/>
            <person name="He Y."/>
        </authorList>
    </citation>
    <scope>STRUCTURE BY ELECTRON MICROSCOPY (4.6 ANGSTROMS) IN COMPLEX WITH THE NHEJ COMPLEX</scope>
    <scope>IDENTIFICATION IN THE NHEJ COMPLEX</scope>
</reference>
<reference key="40">
    <citation type="journal article" date="2010" name="Hum. Mutat.">
        <title>Clinical variability and novel mutations in the NHEJ1 gene in patients with a Nijmegen breakage syndrome-like phenotype.</title>
        <authorList>
            <person name="Dutrannoy V."/>
            <person name="Demuth I."/>
            <person name="Baumann U."/>
            <person name="Schindler D."/>
            <person name="Konrat K."/>
            <person name="Neitzel H."/>
            <person name="Gillessen-Kaesbach G."/>
            <person name="Radszewski J."/>
            <person name="Rothe S."/>
            <person name="Schellenberger M.T."/>
            <person name="Nuernberg G."/>
            <person name="Nuernberg P."/>
            <person name="Teik K.W."/>
            <person name="Nallusamy R."/>
            <person name="Reis A."/>
            <person name="Sperling K."/>
            <person name="Digweed M."/>
            <person name="Varon R."/>
        </authorList>
    </citation>
    <scope>VARIANTS IMD124 GLY-57; 176-ARG--SER-299 DEL AND 178-ARG--SER-299 DEL</scope>
    <scope>INVOLVEMENT IN IMD124</scope>
</reference>
<reference key="41">
    <citation type="journal article" date="2014" name="Case Rep. Pediatr.">
        <title>Cernunnos/XLF Deficiency: A syndromic primary immunodeficiency.</title>
        <authorList>
            <person name="Cipe F.E."/>
            <person name="Aydogmus C."/>
            <person name="Babayigit Hocaoglu A."/>
            <person name="Kilic M."/>
            <person name="Kaya G.D."/>
            <person name="Yilmaz Gulec E."/>
        </authorList>
    </citation>
    <scope>VARIANT IMD124 178-ARG--SER-299 DEL</scope>
    <scope>INVOLVEMENT IN IMD124</scope>
</reference>
<reference key="42">
    <citation type="journal article" date="2017" name="Hum. Mol. Genet.">
        <title>Mutations in XLF/NHEJ1/Cernunnos gene results in downregulation of telomerase genes expression and telomere shortening.</title>
        <authorList>
            <person name="Carrillo J."/>
            <person name="Calvete O."/>
            <person name="Pintado-Berninches L."/>
            <person name="Manguan-Garcia C."/>
            <person name="Sevilla Navarro J."/>
            <person name="Arias-Salgado E.G."/>
            <person name="Sastre L."/>
            <person name="Guenechea G."/>
            <person name="Lopez Granados E."/>
            <person name="de Villartay J.P."/>
            <person name="Revy P."/>
            <person name="Benitez J."/>
            <person name="Perona R."/>
        </authorList>
    </citation>
    <scope>VARIANT IMD124 57-ARG--SER-299 DEL</scope>
    <scope>INVOLVEMENT IN IMD124</scope>
    <scope>FUNCTION</scope>
</reference>
<reference key="43">
    <citation type="journal article" date="2022" name="Front. Immunol.">
        <title>Case Report: Refractory cytopenia with a switch from a transient monosomy 7 to a disease-ameliorating del(20q) in a NHEJ1-deficient long-term survivor.</title>
        <authorList>
            <person name="Poyer F."/>
            <person name="Jimenez Heredia R."/>
            <person name="Novak W."/>
            <person name="Zeitlhofer P."/>
            <person name="Nebral K."/>
            <person name="Dworzak M.N."/>
            <person name="Haas O.A."/>
            <person name="Boztug K."/>
            <person name="Kager L."/>
        </authorList>
    </citation>
    <scope>VARIANT IMD124 PRO-79</scope>
</reference>
<reference key="44">
    <citation type="journal article" date="2023" name="Eur. J. Med. Genet.">
        <title>Cernunnos deficiency: Further delineation in 5 Egyptian patients.</title>
        <authorList>
            <person name="El Hawary R."/>
            <person name="Meshaal S."/>
            <person name="Lotfy S."/>
            <person name="Abd Elaziz D."/>
            <person name="Alkady R."/>
            <person name="Eldash A."/>
            <person name="Erfan A."/>
            <person name="Chohayeb E."/>
            <person name="Saad M."/>
            <person name="Darwish R."/>
            <person name="Boutros J."/>
            <person name="Galal N."/>
            <person name="Elmarsafy A."/>
        </authorList>
    </citation>
    <scope>VARIANT IMD124 178-ARG--SER-299 DEL</scope>
    <scope>INVOLVEMENT IN IMD124</scope>
</reference>
<reference key="45">
    <citation type="journal article" date="2023" name="NPJ Genom. Med.">
        <title>IHH enhancer variant within neighboring NHEJ1 intron causes microphthalmia anophthalmia and coloboma.</title>
        <authorList>
            <person name="Wormser O."/>
            <person name="Perez Y."/>
            <person name="Dolgin V."/>
            <person name="Kamali B."/>
            <person name="Tangeman J.A."/>
            <person name="Gradstein L."/>
            <person name="Yogev Y."/>
            <person name="Hadar N."/>
            <person name="Freund O."/>
            <person name="Drabkin M."/>
            <person name="Halperin D."/>
            <person name="Irron I."/>
            <person name="Grajales-Esquivel E."/>
            <person name="Del Rio-Tsonis K."/>
            <person name="Birnbaum R.Y."/>
            <person name="Akler G."/>
            <person name="Birk O.S."/>
        </authorList>
    </citation>
    <scope>INVOLVEMENT IN MCOPCB13</scope>
</reference>
<protein>
    <recommendedName>
        <fullName evidence="45">Non-homologous end-joining factor 1</fullName>
    </recommendedName>
    <alternativeName>
        <fullName evidence="41">Protein cernunnos</fullName>
    </alternativeName>
    <alternativeName>
        <fullName evidence="42">XRCC4-like factor</fullName>
    </alternativeName>
</protein>
<dbReference type="EMBL" id="AJ972687">
    <property type="protein sequence ID" value="CAI99410.1"/>
    <property type="molecule type" value="mRNA"/>
</dbReference>
<dbReference type="EMBL" id="AK022672">
    <property type="protein sequence ID" value="BAB14168.1"/>
    <property type="molecule type" value="mRNA"/>
</dbReference>
<dbReference type="EMBL" id="CR457291">
    <property type="protein sequence ID" value="CAG33572.1"/>
    <property type="molecule type" value="mRNA"/>
</dbReference>
<dbReference type="EMBL" id="AC020575">
    <property type="status" value="NOT_ANNOTATED_CDS"/>
    <property type="molecule type" value="Genomic_DNA"/>
</dbReference>
<dbReference type="EMBL" id="AC068946">
    <property type="status" value="NOT_ANNOTATED_CDS"/>
    <property type="molecule type" value="Genomic_DNA"/>
</dbReference>
<dbReference type="EMBL" id="AC097468">
    <property type="protein sequence ID" value="AAX88921.1"/>
    <property type="molecule type" value="Genomic_DNA"/>
</dbReference>
<dbReference type="EMBL" id="BC008210">
    <property type="protein sequence ID" value="AAH08210.2"/>
    <property type="molecule type" value="mRNA"/>
</dbReference>
<dbReference type="EMBL" id="BC012732">
    <property type="protein sequence ID" value="AAH12732.1"/>
    <property type="molecule type" value="mRNA"/>
</dbReference>
<dbReference type="EMBL" id="BC030986">
    <property type="protein sequence ID" value="AAH30986.1"/>
    <property type="molecule type" value="mRNA"/>
</dbReference>
<dbReference type="CCDS" id="CCDS2432.1">
    <molecule id="Q9H9Q4-1"/>
</dbReference>
<dbReference type="RefSeq" id="NP_001364427.1">
    <molecule id="Q9H9Q4-1"/>
    <property type="nucleotide sequence ID" value="NM_001377498.1"/>
</dbReference>
<dbReference type="RefSeq" id="NP_079058.1">
    <molecule id="Q9H9Q4-1"/>
    <property type="nucleotide sequence ID" value="NM_024782.3"/>
</dbReference>
<dbReference type="PDB" id="2QM4">
    <property type="method" value="X-ray"/>
    <property type="resolution" value="2.30 A"/>
    <property type="chains" value="A/B/C/D=1-233"/>
</dbReference>
<dbReference type="PDB" id="2R9A">
    <property type="method" value="X-ray"/>
    <property type="resolution" value="2.50 A"/>
    <property type="chains" value="A/B=1-224"/>
</dbReference>
<dbReference type="PDB" id="3Q4F">
    <property type="method" value="X-ray"/>
    <property type="resolution" value="5.50 A"/>
    <property type="chains" value="A/B/E/F=1-224"/>
</dbReference>
<dbReference type="PDB" id="3RWR">
    <property type="method" value="X-ray"/>
    <property type="resolution" value="3.94 A"/>
    <property type="chains" value="D/E/H/I/L/M/O/Q/S/T/W/X=1-224"/>
</dbReference>
<dbReference type="PDB" id="3SR2">
    <property type="method" value="X-ray"/>
    <property type="resolution" value="3.97 A"/>
    <property type="chains" value="C/D/G/H=1-224"/>
</dbReference>
<dbReference type="PDB" id="3W03">
    <property type="method" value="X-ray"/>
    <property type="resolution" value="8.49 A"/>
    <property type="chains" value="A/B=1-233"/>
</dbReference>
<dbReference type="PDB" id="6ERG">
    <property type="method" value="X-ray"/>
    <property type="resolution" value="2.90 A"/>
    <property type="chains" value="C/F=287-299"/>
</dbReference>
<dbReference type="PDB" id="6ERH">
    <property type="method" value="X-ray"/>
    <property type="resolution" value="2.80 A"/>
    <property type="chains" value="M/T=281-299"/>
</dbReference>
<dbReference type="PDB" id="7LSY">
    <property type="method" value="EM"/>
    <property type="resolution" value="8.40 A"/>
    <property type="chains" value="H/I=1-299"/>
</dbReference>
<dbReference type="PDB" id="7LT3">
    <property type="method" value="EM"/>
    <property type="resolution" value="4.60 A"/>
    <property type="chains" value="H/I=1-299"/>
</dbReference>
<dbReference type="PDB" id="7NFC">
    <property type="method" value="EM"/>
    <property type="resolution" value="4.14 A"/>
    <property type="chains" value="Q/R=1-299"/>
</dbReference>
<dbReference type="PDB" id="7NFE">
    <property type="method" value="EM"/>
    <property type="resolution" value="4.29 A"/>
    <property type="chains" value="F/G=1-299"/>
</dbReference>
<dbReference type="PDB" id="7ZYG">
    <property type="method" value="EM"/>
    <property type="resolution" value="2.68 A"/>
    <property type="chains" value="F=1-299"/>
</dbReference>
<dbReference type="PDB" id="8BHV">
    <property type="method" value="EM"/>
    <property type="resolution" value="4.51 A"/>
    <property type="chains" value="Q/R=1-299"/>
</dbReference>
<dbReference type="PDB" id="8BHY">
    <property type="method" value="EM"/>
    <property type="resolution" value="5.33 A"/>
    <property type="chains" value="f/m=1-299"/>
</dbReference>
<dbReference type="PDB" id="8BOT">
    <property type="method" value="EM"/>
    <property type="resolution" value="7.76 A"/>
    <property type="chains" value="Q/R/X/Y=1-299"/>
</dbReference>
<dbReference type="PDB" id="8EZA">
    <property type="method" value="EM"/>
    <property type="resolution" value="4.39 A"/>
    <property type="chains" value="H/I=1-299"/>
</dbReference>
<dbReference type="PDB" id="8EZB">
    <property type="method" value="EM"/>
    <property type="resolution" value="8.90 A"/>
    <property type="chains" value="H/I=1-299"/>
</dbReference>
<dbReference type="PDBsum" id="2QM4"/>
<dbReference type="PDBsum" id="2R9A"/>
<dbReference type="PDBsum" id="3Q4F"/>
<dbReference type="PDBsum" id="3RWR"/>
<dbReference type="PDBsum" id="3SR2"/>
<dbReference type="PDBsum" id="3W03"/>
<dbReference type="PDBsum" id="6ERG"/>
<dbReference type="PDBsum" id="6ERH"/>
<dbReference type="PDBsum" id="7LSY"/>
<dbReference type="PDBsum" id="7LT3"/>
<dbReference type="PDBsum" id="7NFC"/>
<dbReference type="PDBsum" id="7NFE"/>
<dbReference type="PDBsum" id="7ZYG"/>
<dbReference type="PDBsum" id="8BHV"/>
<dbReference type="PDBsum" id="8BHY"/>
<dbReference type="PDBsum" id="8BOT"/>
<dbReference type="PDBsum" id="8EZA"/>
<dbReference type="PDBsum" id="8EZB"/>
<dbReference type="EMDB" id="EMD-12299"/>
<dbReference type="EMDB" id="EMD-12301"/>
<dbReference type="EMDB" id="EMD-15022"/>
<dbReference type="EMDB" id="EMD-16070"/>
<dbReference type="EMDB" id="EMD-16074"/>
<dbReference type="EMDB" id="EMD-16145"/>
<dbReference type="EMDB" id="EMD-23509"/>
<dbReference type="EMDB" id="EMD-23510"/>
<dbReference type="EMDB" id="EMD-23512"/>
<dbReference type="EMDB" id="EMD-23515"/>
<dbReference type="EMDB" id="EMD-28732"/>
<dbReference type="EMDB" id="EMD-28733"/>
<dbReference type="EMDB" id="EMD-28736"/>
<dbReference type="EMDB" id="EMD-28739"/>
<dbReference type="SASBDB" id="Q9H9Q4"/>
<dbReference type="SMR" id="Q9H9Q4"/>
<dbReference type="BioGRID" id="122931">
    <property type="interactions" value="19"/>
</dbReference>
<dbReference type="CORUM" id="Q9H9Q4"/>
<dbReference type="DIP" id="DIP-37959N"/>
<dbReference type="FunCoup" id="Q9H9Q4">
    <property type="interactions" value="369"/>
</dbReference>
<dbReference type="IntAct" id="Q9H9Q4">
    <property type="interactions" value="10"/>
</dbReference>
<dbReference type="MINT" id="Q9H9Q4"/>
<dbReference type="STRING" id="9606.ENSP00000349313"/>
<dbReference type="GlyGen" id="Q9H9Q4">
    <property type="glycosylation" value="1 site, 1 O-linked glycan (1 site)"/>
</dbReference>
<dbReference type="iPTMnet" id="Q9H9Q4"/>
<dbReference type="PhosphoSitePlus" id="Q9H9Q4"/>
<dbReference type="BioMuta" id="NHEJ1"/>
<dbReference type="DMDM" id="74734059"/>
<dbReference type="jPOST" id="Q9H9Q4"/>
<dbReference type="MassIVE" id="Q9H9Q4"/>
<dbReference type="PaxDb" id="9606-ENSP00000349313"/>
<dbReference type="PeptideAtlas" id="Q9H9Q4"/>
<dbReference type="ProteomicsDB" id="81350">
    <molecule id="Q9H9Q4-1"/>
</dbReference>
<dbReference type="ProteomicsDB" id="81351">
    <molecule id="Q9H9Q4-2"/>
</dbReference>
<dbReference type="Pumba" id="Q9H9Q4"/>
<dbReference type="Antibodypedia" id="34300">
    <property type="antibodies" value="482 antibodies from 31 providers"/>
</dbReference>
<dbReference type="DNASU" id="79840"/>
<dbReference type="Ensembl" id="ENST00000356853.10">
    <molecule id="Q9H9Q4-1"/>
    <property type="protein sequence ID" value="ENSP00000349313.5"/>
    <property type="gene ID" value="ENSG00000187736.14"/>
</dbReference>
<dbReference type="Ensembl" id="ENST00000409720.5">
    <molecule id="Q9H9Q4-2"/>
    <property type="protein sequence ID" value="ENSP00000387290.1"/>
    <property type="gene ID" value="ENSG00000187736.14"/>
</dbReference>
<dbReference type="Ensembl" id="ENST00000457600.3">
    <molecule id="Q9H9Q4-1"/>
    <property type="protein sequence ID" value="ENSP00000407201.2"/>
    <property type="gene ID" value="ENSG00000187736.14"/>
</dbReference>
<dbReference type="Ensembl" id="ENST00000698174.1">
    <molecule id="Q9H9Q4-1"/>
    <property type="protein sequence ID" value="ENSP00000513594.1"/>
    <property type="gene ID" value="ENSG00000187736.14"/>
</dbReference>
<dbReference type="Ensembl" id="ENST00000698202.1">
    <molecule id="Q9H9Q4-1"/>
    <property type="protein sequence ID" value="ENSP00000513605.1"/>
    <property type="gene ID" value="ENSG00000187736.14"/>
</dbReference>
<dbReference type="Ensembl" id="ENST00000698203.1">
    <molecule id="Q9H9Q4-1"/>
    <property type="protein sequence ID" value="ENSP00000513606.1"/>
    <property type="gene ID" value="ENSG00000187736.14"/>
</dbReference>
<dbReference type="GeneID" id="79840"/>
<dbReference type="KEGG" id="hsa:79840"/>
<dbReference type="MANE-Select" id="ENST00000356853.10">
    <property type="protein sequence ID" value="ENSP00000349313.5"/>
    <property type="RefSeq nucleotide sequence ID" value="NM_024782.3"/>
    <property type="RefSeq protein sequence ID" value="NP_079058.1"/>
</dbReference>
<dbReference type="UCSC" id="uc002vjp.5">
    <molecule id="Q9H9Q4-1"/>
    <property type="organism name" value="human"/>
</dbReference>
<dbReference type="AGR" id="HGNC:25737"/>
<dbReference type="CTD" id="79840"/>
<dbReference type="DisGeNET" id="79840"/>
<dbReference type="GeneCards" id="NHEJ1"/>
<dbReference type="HGNC" id="HGNC:25737">
    <property type="gene designation" value="NHEJ1"/>
</dbReference>
<dbReference type="HPA" id="ENSG00000187736">
    <property type="expression patterns" value="Low tissue specificity"/>
</dbReference>
<dbReference type="MalaCards" id="NHEJ1"/>
<dbReference type="MIM" id="611290">
    <property type="type" value="gene"/>
</dbReference>
<dbReference type="MIM" id="611291">
    <property type="type" value="phenotype"/>
</dbReference>
<dbReference type="MIM" id="620968">
    <property type="type" value="phenotype"/>
</dbReference>
<dbReference type="neXtProt" id="NX_Q9H9Q4"/>
<dbReference type="OpenTargets" id="ENSG00000187736"/>
<dbReference type="Orphanet" id="169079">
    <property type="disease" value="Cernunnos-XLF deficiency"/>
</dbReference>
<dbReference type="PharmGKB" id="PA144596401"/>
<dbReference type="VEuPathDB" id="HostDB:ENSG00000187736"/>
<dbReference type="eggNOG" id="ENOG502S0R3">
    <property type="taxonomic scope" value="Eukaryota"/>
</dbReference>
<dbReference type="GeneTree" id="ENSGT00390000009940"/>
<dbReference type="HOGENOM" id="CLU_076115_1_0_1"/>
<dbReference type="InParanoid" id="Q9H9Q4"/>
<dbReference type="OMA" id="LPFYWHF"/>
<dbReference type="OrthoDB" id="2155935at2759"/>
<dbReference type="PAN-GO" id="Q9H9Q4">
    <property type="GO annotations" value="4 GO annotations based on evolutionary models"/>
</dbReference>
<dbReference type="PhylomeDB" id="Q9H9Q4"/>
<dbReference type="TreeFam" id="TF328567"/>
<dbReference type="PathwayCommons" id="Q9H9Q4"/>
<dbReference type="Reactome" id="R-HSA-5693571">
    <property type="pathway name" value="Nonhomologous End-Joining (NHEJ)"/>
</dbReference>
<dbReference type="SignaLink" id="Q9H9Q4"/>
<dbReference type="SIGNOR" id="Q9H9Q4"/>
<dbReference type="BioGRID-ORCS" id="79840">
    <property type="hits" value="38 hits in 1162 CRISPR screens"/>
</dbReference>
<dbReference type="ChiTaRS" id="NHEJ1">
    <property type="organism name" value="human"/>
</dbReference>
<dbReference type="EvolutionaryTrace" id="Q9H9Q4"/>
<dbReference type="GeneWiki" id="XLF_(protein)"/>
<dbReference type="GenomeRNAi" id="79840"/>
<dbReference type="Pharos" id="Q9H9Q4">
    <property type="development level" value="Tbio"/>
</dbReference>
<dbReference type="PRO" id="PR:Q9H9Q4"/>
<dbReference type="Proteomes" id="UP000005640">
    <property type="component" value="Chromosome 2"/>
</dbReference>
<dbReference type="RNAct" id="Q9H9Q4">
    <property type="molecule type" value="protein"/>
</dbReference>
<dbReference type="Bgee" id="ENSG00000187736">
    <property type="expression patterns" value="Expressed in rectum and 132 other cell types or tissues"/>
</dbReference>
<dbReference type="ExpressionAtlas" id="Q9H9Q4">
    <property type="expression patterns" value="baseline and differential"/>
</dbReference>
<dbReference type="GO" id="GO:0032807">
    <property type="term" value="C:DNA ligase IV complex"/>
    <property type="evidence" value="ECO:0000318"/>
    <property type="project" value="GO_Central"/>
</dbReference>
<dbReference type="GO" id="GO:0005958">
    <property type="term" value="C:DNA-dependent protein kinase-DNA ligase 4 complex"/>
    <property type="evidence" value="ECO:0000314"/>
    <property type="project" value="UniProtKB"/>
</dbReference>
<dbReference type="GO" id="GO:0001650">
    <property type="term" value="C:fibrillar center"/>
    <property type="evidence" value="ECO:0000314"/>
    <property type="project" value="HPA"/>
</dbReference>
<dbReference type="GO" id="GO:0070419">
    <property type="term" value="C:nonhomologous end joining complex"/>
    <property type="evidence" value="ECO:0000314"/>
    <property type="project" value="UniProtKB"/>
</dbReference>
<dbReference type="GO" id="GO:0005654">
    <property type="term" value="C:nucleoplasm"/>
    <property type="evidence" value="ECO:0000314"/>
    <property type="project" value="HPA"/>
</dbReference>
<dbReference type="GO" id="GO:0005634">
    <property type="term" value="C:nucleus"/>
    <property type="evidence" value="ECO:0000314"/>
    <property type="project" value="UniProtKB"/>
</dbReference>
<dbReference type="GO" id="GO:0035861">
    <property type="term" value="C:site of double-strand break"/>
    <property type="evidence" value="ECO:0000314"/>
    <property type="project" value="UniProtKB"/>
</dbReference>
<dbReference type="GO" id="GO:0045027">
    <property type="term" value="F:DNA end binding"/>
    <property type="evidence" value="ECO:0000314"/>
    <property type="project" value="UniProtKB"/>
</dbReference>
<dbReference type="GO" id="GO:0070182">
    <property type="term" value="F:DNA polymerase binding"/>
    <property type="evidence" value="ECO:0000353"/>
    <property type="project" value="UniProtKB"/>
</dbReference>
<dbReference type="GO" id="GO:0030183">
    <property type="term" value="P:B cell differentiation"/>
    <property type="evidence" value="ECO:0000315"/>
    <property type="project" value="UniProtKB"/>
</dbReference>
<dbReference type="GO" id="GO:0007417">
    <property type="term" value="P:central nervous system development"/>
    <property type="evidence" value="ECO:0000303"/>
    <property type="project" value="UniProtKB"/>
</dbReference>
<dbReference type="GO" id="GO:0006303">
    <property type="term" value="P:double-strand break repair via nonhomologous end joining"/>
    <property type="evidence" value="ECO:0000314"/>
    <property type="project" value="UniProtKB"/>
</dbReference>
<dbReference type="GO" id="GO:0033152">
    <property type="term" value="P:immunoglobulin V(D)J recombination"/>
    <property type="evidence" value="ECO:0000314"/>
    <property type="project" value="UniProtKB"/>
</dbReference>
<dbReference type="GO" id="GO:0051351">
    <property type="term" value="P:positive regulation of ligase activity"/>
    <property type="evidence" value="ECO:0000303"/>
    <property type="project" value="UniProtKB"/>
</dbReference>
<dbReference type="GO" id="GO:0010212">
    <property type="term" value="P:response to ionizing radiation"/>
    <property type="evidence" value="ECO:0000314"/>
    <property type="project" value="UniProtKB"/>
</dbReference>
<dbReference type="GO" id="GO:0030217">
    <property type="term" value="P:T cell differentiation"/>
    <property type="evidence" value="ECO:0000315"/>
    <property type="project" value="UniProtKB"/>
</dbReference>
<dbReference type="GO" id="GO:0000723">
    <property type="term" value="P:telomere maintenance"/>
    <property type="evidence" value="ECO:0000315"/>
    <property type="project" value="UniProtKB"/>
</dbReference>
<dbReference type="CDD" id="cd22210">
    <property type="entry name" value="HD_XRCC4-like_N"/>
    <property type="match status" value="1"/>
</dbReference>
<dbReference type="FunFam" id="1.10.287.450:FF:000003">
    <property type="entry name" value="Non-homologous end-joining factor 1"/>
    <property type="match status" value="1"/>
</dbReference>
<dbReference type="FunFam" id="2.170.210.10:FF:000001">
    <property type="entry name" value="Non-homologous end-joining factor 1"/>
    <property type="match status" value="1"/>
</dbReference>
<dbReference type="Gene3D" id="2.170.210.10">
    <property type="entry name" value="DNA double-strand break repair and VJ recombination XRCC4, N-terminal"/>
    <property type="match status" value="1"/>
</dbReference>
<dbReference type="Gene3D" id="1.10.287.450">
    <property type="entry name" value="Helix hairpin bin"/>
    <property type="match status" value="1"/>
</dbReference>
<dbReference type="InterPro" id="IPR052287">
    <property type="entry name" value="NHEJ_factor"/>
</dbReference>
<dbReference type="InterPro" id="IPR053829">
    <property type="entry name" value="XLF-like_CC"/>
</dbReference>
<dbReference type="InterPro" id="IPR015381">
    <property type="entry name" value="XLF-like_N"/>
</dbReference>
<dbReference type="InterPro" id="IPR038051">
    <property type="entry name" value="XRCC4-like_N_sf"/>
</dbReference>
<dbReference type="PANTHER" id="PTHR32235">
    <property type="entry name" value="NON-HOMOLOGOUS END-JOINING FACTOR 1"/>
    <property type="match status" value="1"/>
</dbReference>
<dbReference type="PANTHER" id="PTHR32235:SF1">
    <property type="entry name" value="NON-HOMOLOGOUS END-JOINING FACTOR 1"/>
    <property type="match status" value="1"/>
</dbReference>
<dbReference type="Pfam" id="PF09302">
    <property type="entry name" value="XLF"/>
    <property type="match status" value="1"/>
</dbReference>
<dbReference type="Pfam" id="PF21928">
    <property type="entry name" value="XLF_CC"/>
    <property type="match status" value="1"/>
</dbReference>
<feature type="chain" id="PRO_0000228654" description="Non-homologous end-joining factor 1">
    <location>
        <begin position="1"/>
        <end position="299"/>
    </location>
</feature>
<feature type="region of interest" description="Globular head" evidence="46">
    <location>
        <begin position="1"/>
        <end position="135"/>
    </location>
</feature>
<feature type="region of interest" description="C-terminal tail" evidence="1">
    <location>
        <begin position="224"/>
        <end position="288"/>
    </location>
</feature>
<feature type="region of interest" description="Disordered" evidence="2">
    <location>
        <begin position="255"/>
        <end position="299"/>
    </location>
</feature>
<feature type="coiled-coil region" evidence="11">
    <location>
        <begin position="128"/>
        <end position="170"/>
    </location>
</feature>
<feature type="short sequence motif" description="XLM" evidence="47">
    <location>
        <begin position="289"/>
        <end position="299"/>
    </location>
</feature>
<feature type="compositionally biased region" description="Polar residues" evidence="2">
    <location>
        <begin position="255"/>
        <end position="266"/>
    </location>
</feature>
<feature type="compositionally biased region" description="Basic residues" evidence="2">
    <location>
        <begin position="288"/>
        <end position="299"/>
    </location>
</feature>
<feature type="site" description="Leu-lock" evidence="44">
    <location>
        <position position="115"/>
    </location>
</feature>
<feature type="modified residue" description="Phosphoserine; by PRKDC" evidence="14 21 31">
    <location>
        <position position="132"/>
    </location>
</feature>
<feature type="modified residue" description="Phosphoserine; by PRKDC" evidence="14 21 31">
    <location>
        <position position="203"/>
    </location>
</feature>
<feature type="modified residue" description="Phosphoserine; by PRKDC" evidence="14 21 31">
    <location>
        <position position="245"/>
    </location>
</feature>
<feature type="modified residue" description="Phosphoserine; by PRKDC" evidence="14 21 31">
    <location>
        <position position="251"/>
    </location>
</feature>
<feature type="modified residue" description="Phosphoserine" evidence="14 21">
    <location>
        <position position="263"/>
    </location>
</feature>
<feature type="modified residue" description="Phosphothreonine" evidence="14 21">
    <location>
        <position position="266"/>
    </location>
</feature>
<feature type="modified residue" description="Phosphoserine" evidence="58">
    <location>
        <position position="287"/>
    </location>
</feature>
<feature type="splice variant" id="VSP_017689" description="In isoform 2." evidence="40">
    <original>GTSGPLQRPQLSKVKRKKPRGLFS</original>
    <variation>ALCRDLSCQRSRGRSQGVSSVNLLWPQLLRMDLENSFQASP</variation>
    <location>
        <begin position="276"/>
        <end position="299"/>
    </location>
</feature>
<feature type="sequence variant" id="VAR_038790" description="In dbSNP:rs34689457.">
    <original>A</original>
    <variation>T</variation>
    <location>
        <position position="14"/>
    </location>
</feature>
<feature type="sequence variant" id="VAR_090049" description="In IMD124; pathogenic." evidence="30">
    <location>
        <begin position="57"/>
        <end position="299"/>
    </location>
</feature>
<feature type="sequence variant" id="VAR_025704" description="In IMD124; likely pathogenic; fails to translocate to the nucleus; decreased ability to repair double-strand breaks (DSBs); impaired ability to participate in V(D)J recombination; dbSNP:rs118204451." evidence="4 7 16 17">
    <original>R</original>
    <variation>G</variation>
    <location>
        <position position="57"/>
    </location>
</feature>
<feature type="sequence variant" id="VAR_090050" description="In IMD124; uncertain significance." evidence="37">
    <original>L</original>
    <variation>P</variation>
    <location>
        <position position="79"/>
    </location>
</feature>
<feature type="sequence variant" id="VAR_038791" description="In dbSNP:rs1056296.">
    <original>H</original>
    <variation>R</variation>
    <location>
        <position position="89"/>
    </location>
</feature>
<feature type="sequence variant" id="VAR_025705" description="In IMD124; likely pathogenic; abolished ability to repair double-strand breaks (DSBs); abolished ability to participate in V(D)J recombination; dbSNP:rs118204452." evidence="4 16">
    <original>C</original>
    <variation>R</variation>
    <location>
        <position position="123"/>
    </location>
</feature>
<feature type="sequence variant" id="VAR_090051" description="In IMD124; pathogenic." evidence="17">
    <location>
        <begin position="176"/>
        <end position="299"/>
    </location>
</feature>
<feature type="sequence variant" id="VAR_090052" description="In IMD124; pathogenic; abolished ability to repair double-strand breaks (DSBs); abolished ability to participate in V(D)J recombination." evidence="4 17 24 39">
    <location>
        <begin position="178"/>
        <end position="299"/>
    </location>
</feature>
<feature type="sequence variant" id="VAR_038792" description="In dbSNP:rs35270667.">
    <original>Q</original>
    <variation>L</variation>
    <location>
        <position position="256"/>
    </location>
</feature>
<feature type="mutagenesis site" description="Does not affect ability to participate in V(D)J recombination." evidence="16">
    <original>Q</original>
    <variation>A</variation>
    <location>
        <position position="11"/>
    </location>
</feature>
<feature type="mutagenesis site" description="Does not affect ability to participate in V(D)J recombination." evidence="16">
    <original>W</original>
    <variation>A</variation>
    <location>
        <position position="13"/>
    </location>
</feature>
<feature type="mutagenesis site" description="Does not affect ability to participate in V(D)J recombination." evidence="16">
    <original>W</original>
    <variation>A</variation>
    <location>
        <position position="15"/>
    </location>
</feature>
<feature type="mutagenesis site" description="Does not affect ability to participate in V(D)J recombination." evidence="16">
    <original>L</original>
    <variation>A</variation>
    <location>
        <position position="24"/>
    </location>
</feature>
<feature type="mutagenesis site" description="Abolished ability to participate in V(D)J recombination." evidence="16">
    <original>K</original>
    <variation>A</variation>
    <location>
        <position position="26"/>
    </location>
</feature>
<feature type="mutagenesis site" description="Does not affect ability to participate in V(D)J recombination." evidence="16">
    <original>L</original>
    <variation>A</variation>
    <location>
        <position position="37"/>
    </location>
</feature>
<feature type="mutagenesis site" description="Does not affect ability to participate in V(D)J recombination." evidence="16">
    <original>D</original>
    <variation>A</variation>
    <variation>P</variation>
    <location>
        <position position="40"/>
    </location>
</feature>
<feature type="mutagenesis site" description="Does not affect ability to participate in V(D)J recombination." evidence="16">
    <original>L</original>
    <variation>A</variation>
    <location>
        <position position="41"/>
    </location>
</feature>
<feature type="mutagenesis site" description="Does not affect ability to participate in V(D)J recombination." evidence="16">
    <original>Q</original>
    <variation>A</variation>
    <location>
        <position position="43"/>
    </location>
</feature>
<feature type="mutagenesis site" description="Does not affect ability to participate in V(D)J recombination." evidence="16">
    <original>L</original>
    <variation>E</variation>
    <location>
        <position position="61"/>
    </location>
</feature>
<feature type="mutagenesis site" description="Abolished interaction with XRCC4." evidence="19">
    <original>RL</original>
    <variation>ED</variation>
    <location>
        <begin position="64"/>
        <end position="65"/>
    </location>
</feature>
<feature type="mutagenesis site" description="Abolished ability to repair double-strand breaks (DSBs). Abolished interaction with XRCC4. Abolished ability to participate in V(D)J recombination." evidence="16 18">
    <original>R</original>
    <variation>E</variation>
    <location>
        <position position="64"/>
    </location>
</feature>
<feature type="mutagenesis site" description="Does not affect ability to participate in V(D)J recombination." evidence="16">
    <original>R</original>
    <variation>G</variation>
    <location>
        <position position="64"/>
    </location>
</feature>
<feature type="mutagenesis site" description="Abolished ability to repair double-strand breaks (DSBs). Abolished ability to participate in V(D)J recombination. Decreased interaction with XRCC4." evidence="16">
    <original>L</original>
    <variation>D</variation>
    <location>
        <position position="65"/>
    </location>
</feature>
<feature type="mutagenesis site" description="Does not affect ability to repair double-strand breaks (DSBs). Does not affect interaction with XRCC4." evidence="13">
    <original>I</original>
    <variation>S</variation>
    <location>
        <position position="105"/>
    </location>
</feature>
<feature type="mutagenesis site" description="Does not affect ability to repair double-strand breaks (DSBs). Does not affect interaction with XRCC4." evidence="13">
    <original>E</original>
    <variation>A</variation>
    <location>
        <position position="111"/>
    </location>
</feature>
<feature type="mutagenesis site" description="Does not affect interaction with XRCC4." evidence="18">
    <original>E</original>
    <variation>K</variation>
    <location>
        <position position="111"/>
    </location>
</feature>
<feature type="mutagenesis site" description="Impaired ability to repair double-strand breaks (DSBs). Abolished ability to bridge DNA. Some studies show lack of interaction with XRCC4 while another shows that this mutant retains the ability to interact with XRCC4." evidence="13 19 22 28 32">
    <original>L</original>
    <variation>A</variation>
    <location>
        <position position="115"/>
    </location>
</feature>
<feature type="mutagenesis site" description="Impaired ability to repair double-strand breaks (DSBs). Abolished ability to bridge DNA. Abolished ability to participate in V(D)J recombination. Abolished interaction with XRCC4." evidence="13 16 19 22 28">
    <original>L</original>
    <variation>D</variation>
    <location>
        <position position="115"/>
    </location>
</feature>
<feature type="mutagenesis site" description="Does not affect ability to participate in V(D)J recombination." evidence="16">
    <original>P</original>
    <variation>D</variation>
    <location>
        <position position="116"/>
    </location>
</feature>
<feature type="mutagenesis site" description="Does not affect ability to participate in V(D)J recombination." evidence="16">
    <original>F</original>
    <variation>A</variation>
    <location>
        <position position="117"/>
    </location>
</feature>
<feature type="mutagenesis site" description="Abolished ability to participate in V(D)J recombination." evidence="16">
    <original>F</original>
    <variation>D</variation>
    <location>
        <position position="117"/>
    </location>
</feature>
<feature type="mutagenesis site" description="Does not affect ability to participate in V(D)J recombination." evidence="16">
    <original>Y</original>
    <variation>A</variation>
    <variation>D</variation>
    <location>
        <position position="118"/>
    </location>
</feature>
<feature type="mutagenesis site" description="Abolished ability to participate in V(D)J recombination." evidence="16">
    <original>W</original>
    <variation>A</variation>
    <location>
        <position position="119"/>
    </location>
</feature>
<feature type="mutagenesis site" description="In 6A mutant; abolished phosphorylation; does not affect ability to repair double-strand breaks (DSBs), possibly because of redundancy with XRCC4 phosphorylation sites; when associated with A-203, A-245, A-251, A-263 and A-266. In XLF-Ala mutant; abolished phosphorylation by PRKDC; does not affect ability to bridge DNA when associated with XRCC4 phosphorylation-defective mutant; when associated with A-203, A-245 and A-251." evidence="14 31">
    <original>S</original>
    <variation>A</variation>
    <location>
        <position position="132"/>
    </location>
</feature>
<feature type="mutagenesis site" description="In XLF-Asp mutant; phospho-mimetic mutant; abolished ability to bridge DNA when associated with XRCC4 phospho-mimetic mutant; when associated with D-203, D-245 and D-251." evidence="31">
    <original>S</original>
    <variation>D</variation>
    <location>
        <position position="132"/>
    </location>
</feature>
<feature type="mutagenesis site" description="Does not affect ability to participate in V(D)J recombination." evidence="16">
    <original>L</original>
    <variation>A</variation>
    <location>
        <position position="135"/>
    </location>
</feature>
<feature type="mutagenesis site" description="Does not affect ability to participate in V(D)J recombination." evidence="16">
    <original>R</original>
    <variation>A</variation>
    <variation>N</variation>
    <location>
        <position position="137"/>
    </location>
</feature>
<feature type="mutagenesis site" description="Does not affect ability to participate in V(D)J recombination." evidence="16">
    <original>P</original>
    <variation>A</variation>
    <location>
        <position position="138"/>
    </location>
</feature>
<feature type="mutagenesis site" description="Does not affect ability to participate in V(D)J recombination." evidence="16">
    <original>L</original>
    <variation>A</variation>
    <location>
        <position position="139"/>
    </location>
</feature>
<feature type="mutagenesis site" description="Does not affect ability to repair double-strand breaks (DSBs). Does not affect interaction with XRCC4." evidence="13">
    <original>E</original>
    <variation>A</variation>
    <location>
        <position position="169"/>
    </location>
</feature>
<feature type="mutagenesis site" description="Impaired ability to repair double-strand breaks (DSBs). Does not affect interaction with XRCC4." evidence="13">
    <original>L</original>
    <variation>A</variation>
    <location>
        <position position="174"/>
    </location>
</feature>
<feature type="mutagenesis site" description="Impaired ability to repair double-strand breaks (DSBs). Does not affect interaction with XRCC4. Does not affect ability to participate in V(D)J recombination." evidence="13 16">
    <original>R</original>
    <variation>A</variation>
    <location>
        <position position="178"/>
    </location>
</feature>
<feature type="mutagenesis site" description="Impaired ability to repair double-strand breaks (DSBs). Does not affect interaction with XRCC4." evidence="13">
    <original>L</original>
    <variation>A</variation>
    <location>
        <position position="179"/>
    </location>
</feature>
<feature type="mutagenesis site" description="Does not affect ability to participate in V(D)J recombination." evidence="16">
    <original>E</original>
    <variation>A</variation>
    <location>
        <position position="182"/>
    </location>
</feature>
<feature type="mutagenesis site" description="Does not affect ability to repair double-strand breaks (DSBs). Does not affect interaction with XRCC4." evidence="13">
    <original>E</original>
    <variation>A</variation>
    <location>
        <position position="185"/>
    </location>
</feature>
<feature type="mutagenesis site" description="Does not affect ability to participate in V(D)J recombination." evidence="16">
    <original>FL</original>
    <variation>DD</variation>
    <location>
        <begin position="189"/>
        <end position="190"/>
    </location>
</feature>
<feature type="mutagenesis site" description="Does not affect ability to repair double-strand breaks (DSBs). Does not affect interaction with XRCC4." evidence="13">
    <original>I</original>
    <variation>A</variation>
    <location>
        <position position="195"/>
    </location>
</feature>
<feature type="mutagenesis site" description="In 6A mutant; abolished phosphorylation; does not affect ability to repair double-strand breaks (DSBs), possibly because of redundancy with XRCC4 phosphorylation sites; when associated with A-132, A-245, A-251, A-263 and A-266. In XLF-Ala mutant; abolished phosphorylation by PRKDC; does not affect ability to bridge DNA when associated with XRCC4 phosphorylation-defective mutant; when associated with A-132, A-245 and A-251." evidence="14 21 31">
    <original>S</original>
    <variation>A</variation>
    <location>
        <position position="203"/>
    </location>
</feature>
<feature type="mutagenesis site" description="In XLF-Asp mutant; phospho-mimetic mutant; abolished ability to bridge DNA when associated with XRCC4 phospho-mimetic mutant; when associated with D-132, D-245 and D-251." evidence="31">
    <original>S</original>
    <variation>D</variation>
    <location>
        <position position="203"/>
    </location>
</feature>
<feature type="mutagenesis site" description="In 6A mutant; abolished phosphorylation; does not affect ability to repair double-strand breaks (DSBs), possibly because of redundancy with XRCC4 phosphorylation sites; when associated with A-132, A-203, A-251, A-263 and A-266. In XLF-Ala mutant; abolished phosphorylation by PRKDC; does not affect ability to bridge DNA when associated with XRCC4 phosphorylation-defective mutant; when associated with A-132, A-203 and A-251." evidence="14 21 31">
    <original>S</original>
    <variation>A</variation>
    <location>
        <position position="245"/>
    </location>
</feature>
<feature type="mutagenesis site" description="In XLF-Asp mutant; phospho-mimetic mutant; abolished ability to bridge DNA when associated with XRCC4 phospho-mimetic mutant; when associated with D-132, D-203 and D-251." evidence="31">
    <original>S</original>
    <variation>D</variation>
    <location>
        <position position="245"/>
    </location>
</feature>
<feature type="mutagenesis site" description="In 6A mutant; abolished phosphorylation; does not affect ability to repair double-strand breaks (DSBs), possibly because of redundancy with XRCC4 phosphorylation sites; when associated with A-132, A-203, A-245, A-263 and A-266. In XLF-Ala mutant; abolished phosphorylation by PRKDC; does not affect ability to bridge DNA when associated with XRCC4 phosphorylation-defective mutant; when associated with A-132, A-203 and A-245." evidence="14 21 31">
    <original>S</original>
    <variation>A</variation>
    <location>
        <position position="251"/>
    </location>
</feature>
<feature type="mutagenesis site" description="In XLF-Asp mutant; phospho-mimetic mutant; abolished ability to bridge DNA when associated with XRCC4 phospho-mimetic mutant; when associated with D-132, D-203 and D-245." evidence="31">
    <original>S</original>
    <variation>D</variation>
    <location>
        <position position="251"/>
    </location>
</feature>
<feature type="mutagenesis site" description="In 6A mutant; abolished phosphorylation; does not affect ability to repair double-strand breaks (DSBs), possibly because of redundancy with XRCC4 phosphorylation sites; when associated with A-132, A-203, A-245, A-251 and A-266." evidence="14 21">
    <original>S</original>
    <variation>A</variation>
    <location>
        <position position="263"/>
    </location>
</feature>
<feature type="mutagenesis site" description="In 6A mutant; abolished phosphorylation; does not affect ability to repair double-strand breaks (DSBs), possibly because of redundancy with XRCC4 phosphorylation sites; when associated with A-132, A-203, A-245, A-251 and A-263." evidence="14 21">
    <original>T</original>
    <variation>A</variation>
    <location>
        <position position="266"/>
    </location>
</feature>
<feature type="mutagenesis site" description="Does not affect ability to repair double-strand breaks (DSBs). Does not affect interaction with XRCC4." evidence="13">
    <original>S</original>
    <variation>A</variation>
    <location>
        <position position="278"/>
    </location>
</feature>
<feature type="mutagenesis site" description="Abolished DNA-binding." evidence="22">
    <original>K</original>
    <variation>A</variation>
    <location>
        <position position="293"/>
    </location>
</feature>
<feature type="sequence conflict" description="In Ref. 3; CAG33572." evidence="45" ref="3">
    <original>Q</original>
    <variation>R</variation>
    <location>
        <position position="256"/>
    </location>
</feature>
<feature type="helix" evidence="59">
    <location>
        <begin position="1"/>
        <end position="9"/>
    </location>
</feature>
<feature type="strand" evidence="59">
    <location>
        <begin position="14"/>
        <end position="17"/>
    </location>
</feature>
<feature type="strand" evidence="59">
    <location>
        <begin position="19"/>
        <end position="30"/>
    </location>
</feature>
<feature type="strand" evidence="59">
    <location>
        <begin position="33"/>
        <end position="39"/>
    </location>
</feature>
<feature type="strand" evidence="59">
    <location>
        <begin position="44"/>
        <end position="49"/>
    </location>
</feature>
<feature type="helix" evidence="59">
    <location>
        <begin position="51"/>
        <end position="61"/>
    </location>
</feature>
<feature type="helix" evidence="59">
    <location>
        <begin position="69"/>
        <end position="85"/>
    </location>
</feature>
<feature type="strand" evidence="59">
    <location>
        <begin position="94"/>
        <end position="100"/>
    </location>
</feature>
<feature type="strand" evidence="59">
    <location>
        <begin position="103"/>
        <end position="112"/>
    </location>
</feature>
<feature type="strand" evidence="59">
    <location>
        <begin position="115"/>
        <end position="125"/>
    </location>
</feature>
<feature type="helix" evidence="59">
    <location>
        <begin position="128"/>
        <end position="134"/>
    </location>
</feature>
<feature type="helix" evidence="59">
    <location>
        <begin position="136"/>
        <end position="169"/>
    </location>
</feature>
<feature type="helix" evidence="59">
    <location>
        <begin position="186"/>
        <end position="196"/>
    </location>
</feature>
<feature type="helix" evidence="59">
    <location>
        <begin position="198"/>
        <end position="201"/>
    </location>
</feature>
<feature type="helix" evidence="59">
    <location>
        <begin position="208"/>
        <end position="213"/>
    </location>
</feature>
<feature type="helix" evidence="59">
    <location>
        <begin position="215"/>
        <end position="228"/>
    </location>
</feature>
<feature type="helix" evidence="60">
    <location>
        <begin position="296"/>
        <end position="298"/>
    </location>
</feature>
<name>NHEJ1_HUMAN</name>
<gene>
    <name evidence="43 48" type="primary">NHEJ1</name>
    <name evidence="42" type="synonym">XLF</name>
</gene>
<proteinExistence type="evidence at protein level"/>
<evidence type="ECO:0000250" key="1">
    <source>
        <dbReference type="UniProtKB" id="A0A1L8ENT6"/>
    </source>
</evidence>
<evidence type="ECO:0000256" key="2">
    <source>
        <dbReference type="SAM" id="MobiDB-lite"/>
    </source>
</evidence>
<evidence type="ECO:0000269" key="3">
    <source>
    </source>
</evidence>
<evidence type="ECO:0000269" key="4">
    <source>
    </source>
</evidence>
<evidence type="ECO:0000269" key="5">
    <source>
    </source>
</evidence>
<evidence type="ECO:0000269" key="6">
    <source>
    </source>
</evidence>
<evidence type="ECO:0000269" key="7">
    <source>
    </source>
</evidence>
<evidence type="ECO:0000269" key="8">
    <source>
    </source>
</evidence>
<evidence type="ECO:0000269" key="9">
    <source>
    </source>
</evidence>
<evidence type="ECO:0000269" key="10">
    <source>
    </source>
</evidence>
<evidence type="ECO:0000269" key="11">
    <source>
    </source>
</evidence>
<evidence type="ECO:0000269" key="12">
    <source>
    </source>
</evidence>
<evidence type="ECO:0000269" key="13">
    <source>
    </source>
</evidence>
<evidence type="ECO:0000269" key="14">
    <source>
    </source>
</evidence>
<evidence type="ECO:0000269" key="15">
    <source>
    </source>
</evidence>
<evidence type="ECO:0000269" key="16">
    <source>
    </source>
</evidence>
<evidence type="ECO:0000269" key="17">
    <source>
    </source>
</evidence>
<evidence type="ECO:0000269" key="18">
    <source>
    </source>
</evidence>
<evidence type="ECO:0000269" key="19">
    <source>
    </source>
</evidence>
<evidence type="ECO:0000269" key="20">
    <source>
    </source>
</evidence>
<evidence type="ECO:0000269" key="21">
    <source>
    </source>
</evidence>
<evidence type="ECO:0000269" key="22">
    <source>
    </source>
</evidence>
<evidence type="ECO:0000269" key="23">
    <source>
    </source>
</evidence>
<evidence type="ECO:0000269" key="24">
    <source>
    </source>
</evidence>
<evidence type="ECO:0000269" key="25">
    <source>
    </source>
</evidence>
<evidence type="ECO:0000269" key="26">
    <source>
    </source>
</evidence>
<evidence type="ECO:0000269" key="27">
    <source>
    </source>
</evidence>
<evidence type="ECO:0000269" key="28">
    <source>
    </source>
</evidence>
<evidence type="ECO:0000269" key="29">
    <source>
    </source>
</evidence>
<evidence type="ECO:0000269" key="30">
    <source>
    </source>
</evidence>
<evidence type="ECO:0000269" key="31">
    <source>
    </source>
</evidence>
<evidence type="ECO:0000269" key="32">
    <source>
    </source>
</evidence>
<evidence type="ECO:0000269" key="33">
    <source>
    </source>
</evidence>
<evidence type="ECO:0000269" key="34">
    <source>
    </source>
</evidence>
<evidence type="ECO:0000269" key="35">
    <source>
    </source>
</evidence>
<evidence type="ECO:0000269" key="36">
    <source>
    </source>
</evidence>
<evidence type="ECO:0000269" key="37">
    <source>
    </source>
</evidence>
<evidence type="ECO:0000269" key="38">
    <source>
    </source>
</evidence>
<evidence type="ECO:0000269" key="39">
    <source>
    </source>
</evidence>
<evidence type="ECO:0000303" key="40">
    <source>
    </source>
</evidence>
<evidence type="ECO:0000303" key="41">
    <source>
    </source>
</evidence>
<evidence type="ECO:0000303" key="42">
    <source>
    </source>
</evidence>
<evidence type="ECO:0000303" key="43">
    <source>
    </source>
</evidence>
<evidence type="ECO:0000303" key="44">
    <source>
    </source>
</evidence>
<evidence type="ECO:0000305" key="45"/>
<evidence type="ECO:0000305" key="46">
    <source>
    </source>
</evidence>
<evidence type="ECO:0000305" key="47">
    <source>
    </source>
</evidence>
<evidence type="ECO:0000312" key="48">
    <source>
        <dbReference type="HGNC" id="HGNC:25737"/>
    </source>
</evidence>
<evidence type="ECO:0007744" key="49">
    <source>
        <dbReference type="PDB" id="2R9A"/>
    </source>
</evidence>
<evidence type="ECO:0007744" key="50">
    <source>
        <dbReference type="PDB" id="3Q4F"/>
    </source>
</evidence>
<evidence type="ECO:0007744" key="51">
    <source>
        <dbReference type="PDB" id="3RWR"/>
    </source>
</evidence>
<evidence type="ECO:0007744" key="52">
    <source>
        <dbReference type="PDB" id="3SR2"/>
    </source>
</evidence>
<evidence type="ECO:0007744" key="53">
    <source>
        <dbReference type="PDB" id="3W03"/>
    </source>
</evidence>
<evidence type="ECO:0007744" key="54">
    <source>
        <dbReference type="PDB" id="7LSY"/>
    </source>
</evidence>
<evidence type="ECO:0007744" key="55">
    <source>
        <dbReference type="PDB" id="7LT3"/>
    </source>
</evidence>
<evidence type="ECO:0007744" key="56">
    <source>
        <dbReference type="PDB" id="7NFC"/>
    </source>
</evidence>
<evidence type="ECO:0007744" key="57">
    <source>
        <dbReference type="PDB" id="7NFE"/>
    </source>
</evidence>
<evidence type="ECO:0007744" key="58">
    <source>
    </source>
</evidence>
<evidence type="ECO:0007829" key="59">
    <source>
        <dbReference type="PDB" id="2QM4"/>
    </source>
</evidence>
<evidence type="ECO:0007829" key="60">
    <source>
        <dbReference type="PDB" id="7ZYG"/>
    </source>
</evidence>